<sequence length="1473" mass="165866">MAGGAWGRLACYLEFLKKEELKEFQLLLANKAHSRSSSGETPAQPEKTSGMEVASYLVAQYGEQRAWDLALHTWEQMGLRSLCAQAQEGAGHSPSFPYSPSEPHLGSPSQPTSTAVLMPWIHELPAGCTQGSERRVLRQLPDTSGRRWREISASLLYQALPSSPDHESPSQESPNAPTSTAVLGSWGSPPQPSLAPREQEAPGTQWPLDETSGIYYTEIREREREKSEKGRPPWAAVVGTPPQAHTSLQPHHHPWEPSVRESLCSTWPWKNEDFNQKFTQLLLLQRPHPRSQDPLVKRSWPDYVEENRGHLIEIRDLFGPGLDTQEPRIVILQGAAGIGKSTLARQVKEAWGRGQLYGDRFQHVFYFSCRELAQSKVVSLAELIGKDGTATPAPIRQILSRPERLLFILDGVDEPGWVLQEPSSELCLHWSQPQPADALLGSLLGKTILPEASFLITARTTALQNLIPSLEQARWVEVLGFSESSRKEYFYRYFTDERQAIRAFRLVKSNKELWALCLVPWVSWLACTCLMQQMKRKEKLTLTSKTTTTLCLHYLAQALQAQPLGPQLRDLCSLAAEGIWQKKTLFSPDDLRKHGLDGAIISTFLKMGILQEHPIPLSYSFIHLCFQEFFAAMSYVLEDEKGRGKHSNCIIDLEKTLEAYGIHGLFGASTTRFLLGLLSDEGEREMENIFHCRLSQGRNLMQWVPSLQLLLQPHSLESLHCLYETRNKTFLTQVMAHFEEMGMCVETDMELLVCTFCIKFSRHVKKLQLIEGRQHRSTWSPTMVVLFRWVPVTDAYWQILFSVLKVTRNLKELDLSGNSLSHSAVKSLCKTLRRPRCLLETLRLAGCGLTAEDCKDLAFGLRANQTLTELDLSFNVLTDAGAKHLCQRLRQPSCKLQRLQLVSCGLTSDCCQDLASVLSASPSLKELDLQQNNLDDVGVRLLCEGLRHPACKLIRLGLDQTTLSDEMRQELRALEQEKPQLLIFSRRKPSVMTPTEGLDTGEMSNSTSSLKRQRLGSERAASHVAQANLKLLDVSKIFPIAEIAEESSPEVVPVELLCVPSPASQGDLHTKPLGTDDDFWGPTGPVATEVVDKEKNLYRVHFPVAGSYRWPNTGLCFVMREAVTVEIEFCVWDQFLGEINPQHSWMVAGPLLDIKAEPGAVEAVHLPHFVALQGGHVDTSLFQMAHFKEEGMLLEKPARVELHHIVLENPSFSPLGVLLKMIHNALRFIPVTSVVLLYHRVHPEEVTFHLYLIPSDCSIRKAIDDLEMKFQFVRIHKPPPLTPLYMGCRYTVSGSGSGMLEILPKELELCYRSPGEDQLFSEFYVGHLGSGIRLQVKDKKDETLVWEALVKPGDLMPATTLIPPARIAVPSPLDAPQLLHFVDQYREQLIARVTSVEVVLDKLHGQVLSQEQYERVLAENTRPSQMRKLFSLSQSWDRKCKDGLYQALKETHPHLIMELWEKGSKKGLLPLSS</sequence>
<keyword id="KW-0002">3D-structure</keyword>
<keyword id="KW-0025">Alternative splicing</keyword>
<keyword id="KW-0067">ATP-binding</keyword>
<keyword id="KW-0963">Cytoplasm</keyword>
<keyword id="KW-0903">Direct protein sequencing</keyword>
<keyword id="KW-0225">Disease variant</keyword>
<keyword id="KW-0038">Ectodermal dysplasia</keyword>
<keyword id="KW-0945">Host-virus interaction</keyword>
<keyword id="KW-0378">Hydrolase</keyword>
<keyword id="KW-0391">Immunity</keyword>
<keyword id="KW-1271">Inflammasome</keyword>
<keyword id="KW-0395">Inflammatory response</keyword>
<keyword id="KW-0399">Innate immunity</keyword>
<keyword id="KW-0433">Leucine-rich repeat</keyword>
<keyword id="KW-1210">Necrosis</keyword>
<keyword id="KW-0547">Nucleotide-binding</keyword>
<keyword id="KW-0539">Nucleus</keyword>
<keyword id="KW-0597">Phosphoprotein</keyword>
<keyword id="KW-0645">Protease</keyword>
<keyword id="KW-1267">Proteomics identification</keyword>
<keyword id="KW-1185">Reference proteome</keyword>
<keyword id="KW-0677">Repeat</keyword>
<keyword id="KW-0832">Ubl conjugation</keyword>
<proteinExistence type="evidence at protein level"/>
<organism>
    <name type="scientific">Homo sapiens</name>
    <name type="common">Human</name>
    <dbReference type="NCBI Taxonomy" id="9606"/>
    <lineage>
        <taxon>Eukaryota</taxon>
        <taxon>Metazoa</taxon>
        <taxon>Chordata</taxon>
        <taxon>Craniata</taxon>
        <taxon>Vertebrata</taxon>
        <taxon>Euteleostomi</taxon>
        <taxon>Mammalia</taxon>
        <taxon>Eutheria</taxon>
        <taxon>Euarchontoglires</taxon>
        <taxon>Primates</taxon>
        <taxon>Haplorrhini</taxon>
        <taxon>Catarrhini</taxon>
        <taxon>Hominidae</taxon>
        <taxon>Homo</taxon>
    </lineage>
</organism>
<evidence type="ECO:0000250" key="1">
    <source>
        <dbReference type="UniProtKB" id="Q2LKW6"/>
    </source>
</evidence>
<evidence type="ECO:0000250" key="2">
    <source>
        <dbReference type="UniProtKB" id="Q9EPB4"/>
    </source>
</evidence>
<evidence type="ECO:0000255" key="3">
    <source>
        <dbReference type="PROSITE-ProRule" id="PRU00046"/>
    </source>
</evidence>
<evidence type="ECO:0000255" key="4">
    <source>
        <dbReference type="PROSITE-ProRule" id="PRU00061"/>
    </source>
</evidence>
<evidence type="ECO:0000255" key="5">
    <source>
        <dbReference type="PROSITE-ProRule" id="PRU00136"/>
    </source>
</evidence>
<evidence type="ECO:0000255" key="6">
    <source>
        <dbReference type="PROSITE-ProRule" id="PRU01174"/>
    </source>
</evidence>
<evidence type="ECO:0000256" key="7">
    <source>
        <dbReference type="SAM" id="MobiDB-lite"/>
    </source>
</evidence>
<evidence type="ECO:0000269" key="8">
    <source>
    </source>
</evidence>
<evidence type="ECO:0000269" key="9">
    <source>
    </source>
</evidence>
<evidence type="ECO:0000269" key="10">
    <source>
    </source>
</evidence>
<evidence type="ECO:0000269" key="11">
    <source>
    </source>
</evidence>
<evidence type="ECO:0000269" key="12">
    <source>
    </source>
</evidence>
<evidence type="ECO:0000269" key="13">
    <source>
    </source>
</evidence>
<evidence type="ECO:0000269" key="14">
    <source>
    </source>
</evidence>
<evidence type="ECO:0000269" key="15">
    <source>
    </source>
</evidence>
<evidence type="ECO:0000269" key="16">
    <source>
    </source>
</evidence>
<evidence type="ECO:0000269" key="17">
    <source>
    </source>
</evidence>
<evidence type="ECO:0000269" key="18">
    <source>
    </source>
</evidence>
<evidence type="ECO:0000269" key="19">
    <source>
    </source>
</evidence>
<evidence type="ECO:0000269" key="20">
    <source>
    </source>
</evidence>
<evidence type="ECO:0000269" key="21">
    <source>
    </source>
</evidence>
<evidence type="ECO:0000269" key="22">
    <source>
    </source>
</evidence>
<evidence type="ECO:0000269" key="23">
    <source>
    </source>
</evidence>
<evidence type="ECO:0000269" key="24">
    <source>
    </source>
</evidence>
<evidence type="ECO:0000269" key="25">
    <source>
    </source>
</evidence>
<evidence type="ECO:0000269" key="26">
    <source>
    </source>
</evidence>
<evidence type="ECO:0000269" key="27">
    <source>
    </source>
</evidence>
<evidence type="ECO:0000269" key="28">
    <source>
    </source>
</evidence>
<evidence type="ECO:0000269" key="29">
    <source>
    </source>
</evidence>
<evidence type="ECO:0000269" key="30">
    <source>
    </source>
</evidence>
<evidence type="ECO:0000269" key="31">
    <source>
    </source>
</evidence>
<evidence type="ECO:0000269" key="32">
    <source>
    </source>
</evidence>
<evidence type="ECO:0000269" key="33">
    <source>
    </source>
</evidence>
<evidence type="ECO:0000269" key="34">
    <source>
    </source>
</evidence>
<evidence type="ECO:0000269" key="35">
    <source>
    </source>
</evidence>
<evidence type="ECO:0000269" key="36">
    <source>
    </source>
</evidence>
<evidence type="ECO:0000269" key="37">
    <source>
    </source>
</evidence>
<evidence type="ECO:0000269" key="38">
    <source>
    </source>
</evidence>
<evidence type="ECO:0000269" key="39">
    <source>
    </source>
</evidence>
<evidence type="ECO:0000269" key="40">
    <source>
    </source>
</evidence>
<evidence type="ECO:0000269" key="41">
    <source>
    </source>
</evidence>
<evidence type="ECO:0000269" key="42">
    <source>
    </source>
</evidence>
<evidence type="ECO:0000269" key="43">
    <source>
    </source>
</evidence>
<evidence type="ECO:0000269" key="44">
    <source>
    </source>
</evidence>
<evidence type="ECO:0000269" key="45">
    <source>
    </source>
</evidence>
<evidence type="ECO:0000269" key="46">
    <source>
    </source>
</evidence>
<evidence type="ECO:0000269" key="47">
    <source>
    </source>
</evidence>
<evidence type="ECO:0000269" key="48">
    <source>
    </source>
</evidence>
<evidence type="ECO:0000303" key="49">
    <source>
    </source>
</evidence>
<evidence type="ECO:0000303" key="50">
    <source>
    </source>
</evidence>
<evidence type="ECO:0000303" key="51">
    <source>
    </source>
</evidence>
<evidence type="ECO:0000303" key="52">
    <source>
    </source>
</evidence>
<evidence type="ECO:0000303" key="53">
    <source>
    </source>
</evidence>
<evidence type="ECO:0000303" key="54">
    <source>
    </source>
</evidence>
<evidence type="ECO:0000303" key="55">
    <source>
    </source>
</evidence>
<evidence type="ECO:0000303" key="56">
    <source>
    </source>
</evidence>
<evidence type="ECO:0000303" key="57">
    <source>
    </source>
</evidence>
<evidence type="ECO:0000303" key="58">
    <source>
    </source>
</evidence>
<evidence type="ECO:0000303" key="59">
    <source>
    </source>
</evidence>
<evidence type="ECO:0000305" key="60"/>
<evidence type="ECO:0000305" key="61">
    <source>
    </source>
</evidence>
<evidence type="ECO:0000312" key="62">
    <source>
        <dbReference type="HGNC" id="HGNC:14374"/>
    </source>
</evidence>
<evidence type="ECO:0007744" key="63">
    <source>
        <dbReference type="PDB" id="1PN5"/>
    </source>
</evidence>
<evidence type="ECO:0007744" key="64">
    <source>
        <dbReference type="PDB" id="3KAT"/>
    </source>
</evidence>
<evidence type="ECO:0007744" key="65">
    <source>
        <dbReference type="PDB" id="6K7V"/>
    </source>
</evidence>
<evidence type="ECO:0007744" key="66">
    <source>
        <dbReference type="PDB" id="6X6C"/>
    </source>
</evidence>
<evidence type="ECO:0007744" key="67">
    <source>
        <dbReference type="PDB" id="6XKK"/>
    </source>
</evidence>
<evidence type="ECO:0007829" key="68">
    <source>
        <dbReference type="PDB" id="1PN5"/>
    </source>
</evidence>
<evidence type="ECO:0007829" key="69">
    <source>
        <dbReference type="PDB" id="4IFP"/>
    </source>
</evidence>
<evidence type="ECO:0007829" key="70">
    <source>
        <dbReference type="PDB" id="4IM6"/>
    </source>
</evidence>
<evidence type="ECO:0007829" key="71">
    <source>
        <dbReference type="PDB" id="5Y3S"/>
    </source>
</evidence>
<evidence type="ECO:0007829" key="72">
    <source>
        <dbReference type="PDB" id="6X6C"/>
    </source>
</evidence>
<evidence type="ECO:0007829" key="73">
    <source>
        <dbReference type="PDB" id="7WGE"/>
    </source>
</evidence>
<dbReference type="EC" id="3.4.-.-" evidence="23"/>
<dbReference type="EC" id="3.6.4.-" evidence="39"/>
<dbReference type="EMBL" id="AF298548">
    <property type="protein sequence ID" value="AAG15254.1"/>
    <property type="molecule type" value="mRNA"/>
</dbReference>
<dbReference type="EMBL" id="AF310105">
    <property type="protein sequence ID" value="AAG30288.1"/>
    <property type="molecule type" value="mRNA"/>
</dbReference>
<dbReference type="EMBL" id="AF229059">
    <property type="protein sequence ID" value="AAK00748.1"/>
    <property type="molecule type" value="mRNA"/>
</dbReference>
<dbReference type="EMBL" id="AF229060">
    <property type="protein sequence ID" value="AAK00749.1"/>
    <property type="molecule type" value="mRNA"/>
</dbReference>
<dbReference type="EMBL" id="AF229061">
    <property type="protein sequence ID" value="AAK00750.1"/>
    <property type="molecule type" value="mRNA"/>
</dbReference>
<dbReference type="EMBL" id="AF229062">
    <property type="protein sequence ID" value="AAK00751.1"/>
    <property type="molecule type" value="mRNA"/>
</dbReference>
<dbReference type="EMBL" id="AB023143">
    <property type="protein sequence ID" value="BAA76770.2"/>
    <property type="status" value="ALT_INIT"/>
    <property type="molecule type" value="mRNA"/>
</dbReference>
<dbReference type="EMBL" id="AK026393">
    <property type="protein sequence ID" value="BAB15469.1"/>
    <property type="status" value="ALT_SEQ"/>
    <property type="molecule type" value="mRNA"/>
</dbReference>
<dbReference type="EMBL" id="AK026398">
    <property type="protein sequence ID" value="BAB15470.1"/>
    <property type="status" value="ALT_SEQ"/>
    <property type="molecule type" value="mRNA"/>
</dbReference>
<dbReference type="EMBL" id="AC055839">
    <property type="status" value="NOT_ANNOTATED_CDS"/>
    <property type="molecule type" value="Genomic_DNA"/>
</dbReference>
<dbReference type="EMBL" id="BC051787">
    <property type="protein sequence ID" value="AAH51787.1"/>
    <property type="molecule type" value="mRNA"/>
</dbReference>
<dbReference type="EMBL" id="AL117470">
    <property type="protein sequence ID" value="CAB55945.1"/>
    <property type="molecule type" value="mRNA"/>
</dbReference>
<dbReference type="CCDS" id="CCDS32537.1">
    <molecule id="Q9C000-5"/>
</dbReference>
<dbReference type="CCDS" id="CCDS42244.1">
    <molecule id="Q9C000-4"/>
</dbReference>
<dbReference type="CCDS" id="CCDS42245.1">
    <molecule id="Q9C000-2"/>
</dbReference>
<dbReference type="CCDS" id="CCDS42246.1">
    <molecule id="Q9C000-1"/>
</dbReference>
<dbReference type="CCDS" id="CCDS58508.1">
    <molecule id="Q9C000-3"/>
</dbReference>
<dbReference type="PIR" id="T17255">
    <property type="entry name" value="T17255"/>
</dbReference>
<dbReference type="RefSeq" id="NP_001028225.1">
    <molecule id="Q9C000-5"/>
    <property type="nucleotide sequence ID" value="NM_001033053.3"/>
</dbReference>
<dbReference type="RefSeq" id="NP_055737.1">
    <molecule id="Q9C000-2"/>
    <property type="nucleotide sequence ID" value="NM_014922.5"/>
</dbReference>
<dbReference type="RefSeq" id="NP_127497.1">
    <molecule id="Q9C000-1"/>
    <property type="nucleotide sequence ID" value="NM_033004.4"/>
</dbReference>
<dbReference type="RefSeq" id="NP_127499.1">
    <molecule id="Q9C000-4"/>
    <property type="nucleotide sequence ID" value="NM_033006.4"/>
</dbReference>
<dbReference type="RefSeq" id="NP_127500.1">
    <molecule id="Q9C000-3"/>
    <property type="nucleotide sequence ID" value="NM_033007.4"/>
</dbReference>
<dbReference type="PDB" id="1PN5">
    <property type="method" value="NMR"/>
    <property type="chains" value="A=1-93"/>
</dbReference>
<dbReference type="PDB" id="3KAT">
    <property type="method" value="X-ray"/>
    <property type="resolution" value="3.10 A"/>
    <property type="chains" value="A=1371-1467"/>
</dbReference>
<dbReference type="PDB" id="4IFP">
    <property type="method" value="X-ray"/>
    <property type="resolution" value="1.99 A"/>
    <property type="chains" value="A/B/C=1379-1462"/>
</dbReference>
<dbReference type="PDB" id="4IM6">
    <property type="method" value="X-ray"/>
    <property type="resolution" value="1.65 A"/>
    <property type="chains" value="A=791-990"/>
</dbReference>
<dbReference type="PDB" id="5Y3S">
    <property type="method" value="X-ray"/>
    <property type="resolution" value="2.45 A"/>
    <property type="chains" value="A/B/C/D=790-990"/>
</dbReference>
<dbReference type="PDB" id="6K7V">
    <property type="method" value="EM"/>
    <property type="resolution" value="3.70 A"/>
    <property type="chains" value="A/B/C/D/E/F/G/H/I/J/K/L=1379-1466"/>
</dbReference>
<dbReference type="PDB" id="6X6C">
    <property type="method" value="EM"/>
    <property type="resolution" value="2.90 A"/>
    <property type="chains" value="E/F=1-1473"/>
</dbReference>
<dbReference type="PDB" id="6XKK">
    <property type="method" value="EM"/>
    <property type="resolution" value="3.60 A"/>
    <property type="chains" value="A/B/C/D/E/F/G/H/I/J/K/L/M/N/O/P/Q/R/S/T/U/V/a/b/c/d/e/f/g/h=1379-1473"/>
</dbReference>
<dbReference type="PDB" id="7WGE">
    <property type="method" value="EM"/>
    <property type="resolution" value="3.40 A"/>
    <property type="chains" value="A=95-994"/>
</dbReference>
<dbReference type="PDB" id="8ZGD">
    <property type="method" value="X-ray"/>
    <property type="resolution" value="2.05 A"/>
    <property type="chains" value="A=791-990"/>
</dbReference>
<dbReference type="PDBsum" id="1PN5"/>
<dbReference type="PDBsum" id="3KAT"/>
<dbReference type="PDBsum" id="4IFP"/>
<dbReference type="PDBsum" id="4IM6"/>
<dbReference type="PDBsum" id="5Y3S"/>
<dbReference type="PDBsum" id="6K7V"/>
<dbReference type="PDBsum" id="6X6C"/>
<dbReference type="PDBsum" id="6XKK"/>
<dbReference type="PDBsum" id="7WGE"/>
<dbReference type="PDBsum" id="8ZGD"/>
<dbReference type="BMRB" id="Q9C000"/>
<dbReference type="EMDB" id="EMD-22074"/>
<dbReference type="EMDB" id="EMD-22075"/>
<dbReference type="EMDB" id="EMD-22220"/>
<dbReference type="EMDB" id="EMD-32484"/>
<dbReference type="EMDB" id="EMD-9943"/>
<dbReference type="SMR" id="Q9C000"/>
<dbReference type="BioGRID" id="116529">
    <property type="interactions" value="40"/>
</dbReference>
<dbReference type="ComplexPortal" id="CPX-4082">
    <property type="entry name" value="NLRP1 inflammasome"/>
</dbReference>
<dbReference type="CORUM" id="Q9C000"/>
<dbReference type="DIP" id="DIP-38407N"/>
<dbReference type="FunCoup" id="Q9C000">
    <property type="interactions" value="1186"/>
</dbReference>
<dbReference type="IntAct" id="Q9C000">
    <property type="interactions" value="18"/>
</dbReference>
<dbReference type="MINT" id="Q9C000"/>
<dbReference type="STRING" id="9606.ENSP00000460475"/>
<dbReference type="BindingDB" id="Q9C000"/>
<dbReference type="ChEMBL" id="CHEMBL1741214"/>
<dbReference type="MEROPS" id="S79.002"/>
<dbReference type="iPTMnet" id="Q9C000"/>
<dbReference type="PhosphoSitePlus" id="Q9C000"/>
<dbReference type="BioMuta" id="NLRP1"/>
<dbReference type="DMDM" id="17380146"/>
<dbReference type="jPOST" id="Q9C000"/>
<dbReference type="MassIVE" id="Q9C000"/>
<dbReference type="PaxDb" id="9606-ENSP00000478516"/>
<dbReference type="PeptideAtlas" id="Q9C000"/>
<dbReference type="ProteomicsDB" id="19812"/>
<dbReference type="ProteomicsDB" id="79931">
    <molecule id="Q9C000-1"/>
</dbReference>
<dbReference type="ProteomicsDB" id="79932">
    <molecule id="Q9C000-2"/>
</dbReference>
<dbReference type="ProteomicsDB" id="79933">
    <molecule id="Q9C000-3"/>
</dbReference>
<dbReference type="ProteomicsDB" id="79934">
    <molecule id="Q9C000-4"/>
</dbReference>
<dbReference type="Antibodypedia" id="3365">
    <property type="antibodies" value="250 antibodies from 36 providers"/>
</dbReference>
<dbReference type="DNASU" id="22861"/>
<dbReference type="Ensembl" id="ENST00000262467.11">
    <molecule id="Q9C000-5"/>
    <property type="protein sequence ID" value="ENSP00000262467.5"/>
    <property type="gene ID" value="ENSG00000091592.17"/>
</dbReference>
<dbReference type="Ensembl" id="ENST00000269280.9">
    <molecule id="Q9C000-2"/>
    <property type="protein sequence ID" value="ENSP00000269280.4"/>
    <property type="gene ID" value="ENSG00000091592.17"/>
</dbReference>
<dbReference type="Ensembl" id="ENST00000354411.8">
    <molecule id="Q9C000-4"/>
    <property type="protein sequence ID" value="ENSP00000346390.3"/>
    <property type="gene ID" value="ENSG00000091592.17"/>
</dbReference>
<dbReference type="Ensembl" id="ENST00000544378.7">
    <molecule id="Q9C000-5"/>
    <property type="protein sequence ID" value="ENSP00000442029.2"/>
    <property type="gene ID" value="ENSG00000091592.17"/>
</dbReference>
<dbReference type="Ensembl" id="ENST00000571451.7">
    <molecule id="Q9C000-2"/>
    <property type="protein sequence ID" value="ENSP00000459661.3"/>
    <property type="gene ID" value="ENSG00000091592.17"/>
</dbReference>
<dbReference type="Ensembl" id="ENST00000572272.6">
    <molecule id="Q9C000-1"/>
    <property type="protein sequence ID" value="ENSP00000460475.1"/>
    <property type="gene ID" value="ENSG00000091592.17"/>
</dbReference>
<dbReference type="Ensembl" id="ENST00000576905.6">
    <molecule id="Q9C000-2"/>
    <property type="protein sequence ID" value="ENSP00000458303.2"/>
    <property type="gene ID" value="ENSG00000091592.17"/>
</dbReference>
<dbReference type="Ensembl" id="ENST00000577119.5">
    <molecule id="Q9C000-3"/>
    <property type="protein sequence ID" value="ENSP00000460216.1"/>
    <property type="gene ID" value="ENSG00000091592.17"/>
</dbReference>
<dbReference type="Ensembl" id="ENST00000617618.5">
    <molecule id="Q9C000-1"/>
    <property type="protein sequence ID" value="ENSP00000478516.1"/>
    <property type="gene ID" value="ENSG00000091592.17"/>
</dbReference>
<dbReference type="Ensembl" id="ENST00000699709.1">
    <molecule id="Q9C000-1"/>
    <property type="protein sequence ID" value="ENSP00000514534.1"/>
    <property type="gene ID" value="ENSG00000091592.17"/>
</dbReference>
<dbReference type="GeneID" id="22861"/>
<dbReference type="KEGG" id="hsa:22861"/>
<dbReference type="MANE-Select" id="ENST00000572272.6">
    <property type="protein sequence ID" value="ENSP00000460475.1"/>
    <property type="RefSeq nucleotide sequence ID" value="NM_033004.4"/>
    <property type="RefSeq protein sequence ID" value="NP_127497.1"/>
</dbReference>
<dbReference type="UCSC" id="uc002gcg.2">
    <molecule id="Q9C000-1"/>
    <property type="organism name" value="human"/>
</dbReference>
<dbReference type="AGR" id="HGNC:14374"/>
<dbReference type="CTD" id="22861"/>
<dbReference type="DisGeNET" id="22861"/>
<dbReference type="GeneCards" id="NLRP1"/>
<dbReference type="HGNC" id="HGNC:14374">
    <property type="gene designation" value="NLRP1"/>
</dbReference>
<dbReference type="HPA" id="ENSG00000091592">
    <property type="expression patterns" value="Low tissue specificity"/>
</dbReference>
<dbReference type="MalaCards" id="NLRP1"/>
<dbReference type="MIM" id="606579">
    <property type="type" value="phenotype"/>
</dbReference>
<dbReference type="MIM" id="606636">
    <property type="type" value="gene"/>
</dbReference>
<dbReference type="MIM" id="615225">
    <property type="type" value="phenotype"/>
</dbReference>
<dbReference type="MIM" id="617388">
    <property type="type" value="phenotype"/>
</dbReference>
<dbReference type="MIM" id="618803">
    <property type="type" value="phenotype"/>
</dbReference>
<dbReference type="neXtProt" id="NX_Q9C000"/>
<dbReference type="OpenTargets" id="ENSG00000091592"/>
<dbReference type="Orphanet" id="352662">
    <property type="disease" value="Corneal intraepithelial dyskeratosis-palmoplantar hyperkeratosis-laryngeal dyskeratosis syndrome"/>
</dbReference>
<dbReference type="PharmGKB" id="PA162397797"/>
<dbReference type="VEuPathDB" id="HostDB:ENSG00000091592"/>
<dbReference type="eggNOG" id="ENOG502S4A4">
    <property type="taxonomic scope" value="Eukaryota"/>
</dbReference>
<dbReference type="GeneTree" id="ENSGT00940000162176"/>
<dbReference type="HOGENOM" id="CLU_002274_2_4_1"/>
<dbReference type="InParanoid" id="Q9C000"/>
<dbReference type="OMA" id="SWMVCTC"/>
<dbReference type="OrthoDB" id="428577at2759"/>
<dbReference type="PAN-GO" id="Q9C000">
    <property type="GO annotations" value="2 GO annotations based on evolutionary models"/>
</dbReference>
<dbReference type="PhylomeDB" id="Q9C000"/>
<dbReference type="TreeFam" id="TF340267"/>
<dbReference type="PathwayCommons" id="Q9C000"/>
<dbReference type="Reactome" id="R-HSA-844455">
    <property type="pathway name" value="The NLRP1 inflammasome"/>
</dbReference>
<dbReference type="SignaLink" id="Q9C000"/>
<dbReference type="SIGNOR" id="Q9C000"/>
<dbReference type="BioGRID-ORCS" id="22861">
    <property type="hits" value="13 hits in 1160 CRISPR screens"/>
</dbReference>
<dbReference type="ChiTaRS" id="NLRP1">
    <property type="organism name" value="human"/>
</dbReference>
<dbReference type="EvolutionaryTrace" id="Q9C000"/>
<dbReference type="GeneWiki" id="NLRP1"/>
<dbReference type="GenomeRNAi" id="22861"/>
<dbReference type="Pharos" id="Q9C000">
    <property type="development level" value="Tbio"/>
</dbReference>
<dbReference type="PRO" id="PR:Q9C000"/>
<dbReference type="Proteomes" id="UP000005640">
    <property type="component" value="Chromosome 17"/>
</dbReference>
<dbReference type="RNAct" id="Q9C000">
    <property type="molecule type" value="protein"/>
</dbReference>
<dbReference type="Bgee" id="ENSG00000091592">
    <property type="expression patterns" value="Expressed in granulocyte and 125 other cell types or tissues"/>
</dbReference>
<dbReference type="ExpressionAtlas" id="Q9C000">
    <property type="expression patterns" value="baseline and differential"/>
</dbReference>
<dbReference type="GO" id="GO:0005737">
    <property type="term" value="C:cytoplasm"/>
    <property type="evidence" value="ECO:0000303"/>
    <property type="project" value="ComplexPortal"/>
</dbReference>
<dbReference type="GO" id="GO:0005829">
    <property type="term" value="C:cytosol"/>
    <property type="evidence" value="ECO:0000314"/>
    <property type="project" value="HPA"/>
</dbReference>
<dbReference type="GO" id="GO:0072558">
    <property type="term" value="C:NLRP1 inflammasome complex"/>
    <property type="evidence" value="ECO:0000314"/>
    <property type="project" value="UniProtKB"/>
</dbReference>
<dbReference type="GO" id="GO:0072559">
    <property type="term" value="C:NLRP3 inflammasome complex"/>
    <property type="evidence" value="ECO:0000318"/>
    <property type="project" value="GO_Central"/>
</dbReference>
<dbReference type="GO" id="GO:0005730">
    <property type="term" value="C:nucleolus"/>
    <property type="evidence" value="ECO:0000303"/>
    <property type="project" value="ComplexPortal"/>
</dbReference>
<dbReference type="GO" id="GO:0005654">
    <property type="term" value="C:nucleoplasm"/>
    <property type="evidence" value="ECO:0000314"/>
    <property type="project" value="HPA"/>
</dbReference>
<dbReference type="GO" id="GO:0005634">
    <property type="term" value="C:nucleus"/>
    <property type="evidence" value="ECO:0000314"/>
    <property type="project" value="BHF-UCL"/>
</dbReference>
<dbReference type="GO" id="GO:0005524">
    <property type="term" value="F:ATP binding"/>
    <property type="evidence" value="ECO:0000314"/>
    <property type="project" value="UniProtKB"/>
</dbReference>
<dbReference type="GO" id="GO:0016887">
    <property type="term" value="F:ATP hydrolysis activity"/>
    <property type="evidence" value="ECO:0000314"/>
    <property type="project" value="UniProtKB"/>
</dbReference>
<dbReference type="GO" id="GO:0140608">
    <property type="term" value="F:cysteine-type endopeptidase activator activity"/>
    <property type="evidence" value="ECO:0000314"/>
    <property type="project" value="UniProtKB"/>
</dbReference>
<dbReference type="GO" id="GO:0008656">
    <property type="term" value="F:cysteine-type endopeptidase activator activity involved in apoptotic process"/>
    <property type="evidence" value="ECO:0000303"/>
    <property type="project" value="UniProtKB"/>
</dbReference>
<dbReference type="GO" id="GO:0003690">
    <property type="term" value="F:double-stranded DNA binding"/>
    <property type="evidence" value="ECO:0000314"/>
    <property type="project" value="UniProtKB"/>
</dbReference>
<dbReference type="GO" id="GO:0003725">
    <property type="term" value="F:double-stranded RNA binding"/>
    <property type="evidence" value="ECO:0000314"/>
    <property type="project" value="UniProtKB"/>
</dbReference>
<dbReference type="GO" id="GO:0019899">
    <property type="term" value="F:enzyme binding"/>
    <property type="evidence" value="ECO:0000353"/>
    <property type="project" value="UniProtKB"/>
</dbReference>
<dbReference type="GO" id="GO:0140693">
    <property type="term" value="F:molecular condensate scaffold activity"/>
    <property type="evidence" value="ECO:0000314"/>
    <property type="project" value="UniProt"/>
</dbReference>
<dbReference type="GO" id="GO:0038187">
    <property type="term" value="F:pattern recognition receptor activity"/>
    <property type="evidence" value="ECO:0000314"/>
    <property type="project" value="UniProt"/>
</dbReference>
<dbReference type="GO" id="GO:0008233">
    <property type="term" value="F:peptidase activity"/>
    <property type="evidence" value="ECO:0007669"/>
    <property type="project" value="UniProtKB-KW"/>
</dbReference>
<dbReference type="GO" id="GO:0019904">
    <property type="term" value="F:protein domain specific binding"/>
    <property type="evidence" value="ECO:0000353"/>
    <property type="project" value="UniProtKB"/>
</dbReference>
<dbReference type="GO" id="GO:0035591">
    <property type="term" value="F:signaling adaptor activity"/>
    <property type="evidence" value="ECO:0000314"/>
    <property type="project" value="UniProt"/>
</dbReference>
<dbReference type="GO" id="GO:0002218">
    <property type="term" value="P:activation of innate immune response"/>
    <property type="evidence" value="ECO:0000318"/>
    <property type="project" value="GO_Central"/>
</dbReference>
<dbReference type="GO" id="GO:0140374">
    <property type="term" value="P:antiviral innate immune response"/>
    <property type="evidence" value="ECO:0000314"/>
    <property type="project" value="UniProtKB"/>
</dbReference>
<dbReference type="GO" id="GO:0006915">
    <property type="term" value="P:apoptotic process"/>
    <property type="evidence" value="ECO:0000303"/>
    <property type="project" value="UniProtKB"/>
</dbReference>
<dbReference type="GO" id="GO:0071493">
    <property type="term" value="P:cellular response to UV-B"/>
    <property type="evidence" value="ECO:0000315"/>
    <property type="project" value="UniProtKB"/>
</dbReference>
<dbReference type="GO" id="GO:0042742">
    <property type="term" value="P:defense response to bacterium"/>
    <property type="evidence" value="ECO:0000250"/>
    <property type="project" value="BHF-UCL"/>
</dbReference>
<dbReference type="GO" id="GO:0051607">
    <property type="term" value="P:defense response to virus"/>
    <property type="evidence" value="ECO:0000314"/>
    <property type="project" value="UniProtKB"/>
</dbReference>
<dbReference type="GO" id="GO:0006954">
    <property type="term" value="P:inflammatory response"/>
    <property type="evidence" value="ECO:0000318"/>
    <property type="project" value="GO_Central"/>
</dbReference>
<dbReference type="GO" id="GO:0097193">
    <property type="term" value="P:intrinsic apoptotic signaling pathway"/>
    <property type="evidence" value="ECO:0000318"/>
    <property type="project" value="GO_Central"/>
</dbReference>
<dbReference type="GO" id="GO:0051402">
    <property type="term" value="P:neuron apoptotic process"/>
    <property type="evidence" value="ECO:0000314"/>
    <property type="project" value="HGNC-UCL"/>
</dbReference>
<dbReference type="GO" id="GO:1904784">
    <property type="term" value="P:NLRP1 inflammasome complex assembly"/>
    <property type="evidence" value="ECO:0000314"/>
    <property type="project" value="UniProt"/>
</dbReference>
<dbReference type="GO" id="GO:0002221">
    <property type="term" value="P:pattern recognition receptor signaling pathway"/>
    <property type="evidence" value="ECO:0000303"/>
    <property type="project" value="ComplexPortal"/>
</dbReference>
<dbReference type="GO" id="GO:0050729">
    <property type="term" value="P:positive regulation of inflammatory response"/>
    <property type="evidence" value="ECO:0000314"/>
    <property type="project" value="ComplexPortal"/>
</dbReference>
<dbReference type="GO" id="GO:0032731">
    <property type="term" value="P:positive regulation of interleukin-1 beta production"/>
    <property type="evidence" value="ECO:0000314"/>
    <property type="project" value="UniProtKB"/>
</dbReference>
<dbReference type="GO" id="GO:0051260">
    <property type="term" value="P:protein homooligomerization"/>
    <property type="evidence" value="ECO:0000314"/>
    <property type="project" value="UniProtKB"/>
</dbReference>
<dbReference type="GO" id="GO:0070269">
    <property type="term" value="P:pyroptotic inflammatory response"/>
    <property type="evidence" value="ECO:0000314"/>
    <property type="project" value="UniProtKB"/>
</dbReference>
<dbReference type="GO" id="GO:0042981">
    <property type="term" value="P:regulation of apoptotic process"/>
    <property type="evidence" value="ECO:0007669"/>
    <property type="project" value="InterPro"/>
</dbReference>
<dbReference type="GO" id="GO:0050727">
    <property type="term" value="P:regulation of inflammatory response"/>
    <property type="evidence" value="ECO:0000314"/>
    <property type="project" value="BHF-UCL"/>
</dbReference>
<dbReference type="GO" id="GO:0032495">
    <property type="term" value="P:response to muramyl dipeptide"/>
    <property type="evidence" value="ECO:0000250"/>
    <property type="project" value="BHF-UCL"/>
</dbReference>
<dbReference type="GO" id="GO:0097264">
    <property type="term" value="P:self proteolysis"/>
    <property type="evidence" value="ECO:0000314"/>
    <property type="project" value="UniProtKB"/>
</dbReference>
<dbReference type="GO" id="GO:0007165">
    <property type="term" value="P:signal transduction"/>
    <property type="evidence" value="ECO:0000315"/>
    <property type="project" value="UniProtKB"/>
</dbReference>
<dbReference type="CDD" id="cd08330">
    <property type="entry name" value="CARD_ASC_NALP1"/>
    <property type="match status" value="1"/>
</dbReference>
<dbReference type="CDD" id="cd08320">
    <property type="entry name" value="Pyrin_NALPs"/>
    <property type="match status" value="1"/>
</dbReference>
<dbReference type="DisProt" id="DP00554"/>
<dbReference type="FunFam" id="1.10.533.10:FF:000013">
    <property type="entry name" value="Apoptosis-associated speck-like protein containing a CARD"/>
    <property type="match status" value="1"/>
</dbReference>
<dbReference type="FunFam" id="1.10.533.10:FF:000049">
    <property type="entry name" value="NLR family pyrin domain containing 1"/>
    <property type="match status" value="1"/>
</dbReference>
<dbReference type="FunFam" id="3.40.50.300:FF:000897">
    <property type="entry name" value="NLR family pyrin domain containing 1"/>
    <property type="match status" value="1"/>
</dbReference>
<dbReference type="FunFam" id="3.80.10.10:FF:000256">
    <property type="entry name" value="NLR family pyrin domain containing 1"/>
    <property type="match status" value="1"/>
</dbReference>
<dbReference type="Gene3D" id="1.10.533.10">
    <property type="entry name" value="Death Domain, Fas"/>
    <property type="match status" value="2"/>
</dbReference>
<dbReference type="Gene3D" id="3.40.50.300">
    <property type="entry name" value="P-loop containing nucleotide triphosphate hydrolases"/>
    <property type="match status" value="1"/>
</dbReference>
<dbReference type="Gene3D" id="3.80.10.10">
    <property type="entry name" value="Ribonuclease Inhibitor"/>
    <property type="match status" value="1"/>
</dbReference>
<dbReference type="InterPro" id="IPR001315">
    <property type="entry name" value="CARD"/>
</dbReference>
<dbReference type="InterPro" id="IPR033516">
    <property type="entry name" value="CARD8/ASC/NALP1_CARD"/>
</dbReference>
<dbReference type="InterPro" id="IPR004020">
    <property type="entry name" value="DAPIN"/>
</dbReference>
<dbReference type="InterPro" id="IPR011029">
    <property type="entry name" value="DEATH-like_dom_sf"/>
</dbReference>
<dbReference type="InterPro" id="IPR025307">
    <property type="entry name" value="FIIND_dom"/>
</dbReference>
<dbReference type="InterPro" id="IPR001611">
    <property type="entry name" value="Leu-rich_rpt"/>
</dbReference>
<dbReference type="InterPro" id="IPR032675">
    <property type="entry name" value="LRR_dom_sf"/>
</dbReference>
<dbReference type="InterPro" id="IPR007111">
    <property type="entry name" value="NACHT_NTPase"/>
</dbReference>
<dbReference type="InterPro" id="IPR041267">
    <property type="entry name" value="NLRP_HD2"/>
</dbReference>
<dbReference type="InterPro" id="IPR051249">
    <property type="entry name" value="NLRP_Inflammasome"/>
</dbReference>
<dbReference type="InterPro" id="IPR041075">
    <property type="entry name" value="NOD1/2_WH"/>
</dbReference>
<dbReference type="InterPro" id="IPR027417">
    <property type="entry name" value="P-loop_NTPase"/>
</dbReference>
<dbReference type="PANTHER" id="PTHR46985">
    <property type="entry name" value="NACHT, LRR AND PYD DOMAINS-CONTAINING PROTEIN 1"/>
    <property type="match status" value="1"/>
</dbReference>
<dbReference type="PANTHER" id="PTHR46985:SF3">
    <property type="entry name" value="NACHT, LRR AND PYD DOMAINS-CONTAINING PROTEIN 1"/>
    <property type="match status" value="1"/>
</dbReference>
<dbReference type="Pfam" id="PF00619">
    <property type="entry name" value="CARD"/>
    <property type="match status" value="1"/>
</dbReference>
<dbReference type="Pfam" id="PF13553">
    <property type="entry name" value="FIIND"/>
    <property type="match status" value="1"/>
</dbReference>
<dbReference type="Pfam" id="PF00560">
    <property type="entry name" value="LRR_1"/>
    <property type="match status" value="1"/>
</dbReference>
<dbReference type="Pfam" id="PF13516">
    <property type="entry name" value="LRR_6"/>
    <property type="match status" value="2"/>
</dbReference>
<dbReference type="Pfam" id="PF05729">
    <property type="entry name" value="NACHT"/>
    <property type="match status" value="1"/>
</dbReference>
<dbReference type="Pfam" id="PF17776">
    <property type="entry name" value="NLRC4_HD2"/>
    <property type="match status" value="1"/>
</dbReference>
<dbReference type="Pfam" id="PF17779">
    <property type="entry name" value="NOD2_WH"/>
    <property type="match status" value="1"/>
</dbReference>
<dbReference type="Pfam" id="PF02758">
    <property type="entry name" value="PYRIN"/>
    <property type="match status" value="1"/>
</dbReference>
<dbReference type="Pfam" id="PF23679">
    <property type="entry name" value="UPA-FIIND"/>
    <property type="match status" value="1"/>
</dbReference>
<dbReference type="PRINTS" id="PR00364">
    <property type="entry name" value="DISEASERSIST"/>
</dbReference>
<dbReference type="SMART" id="SM00368">
    <property type="entry name" value="LRR_RI"/>
    <property type="match status" value="5"/>
</dbReference>
<dbReference type="SMART" id="SM01289">
    <property type="entry name" value="PYRIN"/>
    <property type="match status" value="1"/>
</dbReference>
<dbReference type="SUPFAM" id="SSF47986">
    <property type="entry name" value="DEATH domain"/>
    <property type="match status" value="2"/>
</dbReference>
<dbReference type="SUPFAM" id="SSF52540">
    <property type="entry name" value="P-loop containing nucleoside triphosphate hydrolases"/>
    <property type="match status" value="1"/>
</dbReference>
<dbReference type="SUPFAM" id="SSF52047">
    <property type="entry name" value="RNI-like"/>
    <property type="match status" value="1"/>
</dbReference>
<dbReference type="PROSITE" id="PS50209">
    <property type="entry name" value="CARD"/>
    <property type="match status" value="1"/>
</dbReference>
<dbReference type="PROSITE" id="PS50824">
    <property type="entry name" value="DAPIN"/>
    <property type="match status" value="1"/>
</dbReference>
<dbReference type="PROSITE" id="PS51830">
    <property type="entry name" value="FIIND"/>
    <property type="match status" value="1"/>
</dbReference>
<dbReference type="PROSITE" id="PS51450">
    <property type="entry name" value="LRR"/>
    <property type="match status" value="3"/>
</dbReference>
<dbReference type="PROSITE" id="PS50837">
    <property type="entry name" value="NACHT"/>
    <property type="match status" value="1"/>
</dbReference>
<name>NLRP1_HUMAN</name>
<gene>
    <name evidence="58 62" type="primary">NLRP1</name>
    <name type="synonym">CARD7</name>
    <name evidence="50" type="synonym">DEFCAP</name>
    <name evidence="49" type="synonym">KIAA0926</name>
    <name evidence="51" type="synonym">NAC</name>
    <name evidence="55" type="synonym">NALP1</name>
</gene>
<accession>Q9C000</accession>
<accession>E9PE50</accession>
<accession>I6L9D9</accession>
<accession>Q9BZZ8</accession>
<accession>Q9BZZ9</accession>
<accession>Q9H5Z7</accession>
<accession>Q9H5Z8</accession>
<accession>Q9HAV8</accession>
<accession>Q9UFT4</accession>
<accession>Q9Y2E0</accession>
<protein>
    <recommendedName>
        <fullName evidence="60">NACHT, LRR and PYD domains-containing protein 1</fullName>
        <ecNumber evidence="23">3.4.-.-</ecNumber>
        <ecNumber evidence="39">3.6.4.-</ecNumber>
    </recommendedName>
    <alternativeName>
        <fullName>Caspase recruitment domain-containing protein 7</fullName>
    </alternativeName>
    <alternativeName>
        <fullName evidence="50">Death effector filament-forming ced-4-like apoptosis protein</fullName>
    </alternativeName>
    <alternativeName>
        <fullName>Nucleotide-binding domain and caspase recruitment domain</fullName>
    </alternativeName>
    <component>
        <recommendedName>
            <fullName evidence="60">NACHT, LRR and PYD domains-containing protein 1, C-terminus</fullName>
            <shortName evidence="59">NLRP1-CT</shortName>
        </recommendedName>
    </component>
    <component>
        <recommendedName>
            <fullName evidence="60">NACHT, LRR and PYD domains-containing protein 1, N-terminus</fullName>
            <shortName evidence="59">NLRP1-NT</shortName>
        </recommendedName>
    </component>
</protein>
<comment type="function">
    <text evidence="9 11 12 16 21 24 25 28 31 33 34 35 37 38 39 40 43 44 45 46 48">Acts as the sensor component of the NLRP1 inflammasome, which mediates inflammasome activation in response to various pathogen-associated signals, leading to subsequent pyroptosis (PubMed:12191486, PubMed:17349957, PubMed:22665479, PubMed:27662089, PubMed:31484767, PubMed:33093214, PubMed:33410748, PubMed:33731929, PubMed:33731932, PubMed:35857590). Inflammasomes are supramolecular complexes that assemble in the cytosol in response to pathogens and other damage-associated signals and play critical roles in innate immunity and inflammation (PubMed:12191486, PubMed:17349957, PubMed:22665479). Acts as a recognition receptor (PRR): recognizes specific pathogens and other damage-associated signals, such as cleavage by some human enteroviruses and rhinoviruses, double-stranded RNA, UV-B irradiation, or Val-boroPro inhibitor, and mediates the formation of the inflammasome polymeric complex composed of NLRP1, CASP1 and PYCARD/ASC (PubMed:12191486, PubMed:17349957, PubMed:22665479, PubMed:25562666, PubMed:30096351, PubMed:30291141, PubMed:33093214, PubMed:33243852, PubMed:33410748, PubMed:35857590). In response to pathogen-associated signals, the N-terminal part of NLRP1 is degraded by the proteasome, releasing the cleaved C-terminal part of the protein (NACHT, LRR and PYD domains-containing protein 1, C-terminus), which polymerizes and associates with PYCARD/ASC to initiate the formation of the inflammasome complex: the NLRP1 inflammasome recruits pro-caspase-1 (proCASP1) and promotes caspase-1 (CASP1) activation, which subsequently cleaves and activates inflammatory cytokines IL1B and IL18 and gasdermin-D (GSDMD), leading to pyroptosis (PubMed:12191486, PubMed:17349957, PubMed:22665479, PubMed:32051255, PubMed:33093214). In the absence of GSDMD expression, the NLRP1 inflammasome is able to recruit and activate CASP8, leading to activation of gasdermin-E (GSDME) (PubMed:33852854, PubMed:35594856). Activation of NLRP1 inflammasome is also required for HMGB1 secretion; the active cytokines and HMGB1 stimulate inflammatory responses (PubMed:22801494). Binds ATP and shows ATPase activity (PubMed:11113115, PubMed:15212762, PubMed:33243852). Plays an important role in antiviral immunity and inflammation in the human airway epithelium (PubMed:33093214). Specifically recognizes a number of pathogen-associated signals: upon infection by human rhinoviruses 14 and 16 (HRV-14 and HRV-16), NLRP1 is cleaved and activated which triggers NLRP1-dependent inflammasome activation and IL18 secretion (PubMed:33093214). Positive-strand RNA viruses, such as Semliki forest virus and long dsRNA activate the NLRP1 inflammasome, triggering IL1B release in a NLRP1-dependent fashion (PubMed:33243852). Acts as a direct sensor for long dsRNA and thus RNA virus infection (PubMed:33243852). May also be activated by muramyl dipeptide (MDP), a fragment of bacterial peptidoglycan, in a NOD2-dependent manner (PubMed:18511561). The NLRP1 inflammasome is also activated in response to UV-B irradiation causing ribosome collisions: ribosome collisions cause phosphorylation and activation of NLRP1 in a MAP3K20-dependent manner, leading to pyroptosis (PubMed:35857590).</text>
</comment>
<comment type="function">
    <molecule>NACHT, LRR and PYD domains-containing protein 1</molecule>
    <text evidence="23">Constitutes the precursor of the NLRP1 inflammasome, which mediates autoproteolytic processing within the FIIND domain to generate the N-terminal and C-terminal parts, which are associated non-covalently in absence of pathogens and other damage-associated signals.</text>
</comment>
<comment type="function">
    <molecule>NACHT, LRR and PYD domains-containing protein 1, N-terminus</molecule>
    <text evidence="38">Regulatory part that prevents formation of the NLRP1 inflammasome: in absence of pathogens and other damage-associated signals, interacts with the C-terminal part of NLRP1 (NACHT, LRR and PYD domains-containing protein 1, C-terminus), preventing activation of the NLRP1 inflammasome (PubMed:33093214). In response to pathogen-associated signals, this part is ubiquitinated and degraded by the proteasome, releasing the cleaved C-terminal part of the protein, which polymerizes and forms the NLRP1 inflammasome (PubMed:33093214).</text>
</comment>
<comment type="function">
    <molecule>NACHT, LRR and PYD domains-containing protein 1, C-terminus</molecule>
    <text evidence="38 43 44">Constitutes the active part of the NLRP1 inflammasome (PubMed:33093214, PubMed:33731929, PubMed:33731932). In absence of pathogens and other damage-associated signals, interacts with the N-terminal part of NLRP1 (NACHT, LRR and PYD domains-containing protein 1, N-terminus), preventing activation of the NLRP1 inflammasome (PubMed:33093214). In response to pathogen-associated signals, the N-terminal part of NLRP1 is degraded by the proteasome, releasing this form, which polymerizes and associates with PYCARD/ASC to form of the NLRP1 inflammasome complex: the NLRP1 inflammasome complex then directly recruits pro-caspase-1 (proCASP1) and promotes caspase-1 (CASP1) activation, leading to gasdermin-D (GSDMD) cleavage and subsequent pyroptosis (PubMed:33093214).</text>
</comment>
<comment type="function">
    <molecule>Isoform 2</molecule>
    <text evidence="16 24">It is unclear whether is involved in inflammasome formation. It is not cleaved within the FIIND domain, does not assemble into specks, nor promote IL1B release (PubMed:22665479). However, in an vitro cell-free system, it has been shown to be activated by MDP (PubMed:17349957).</text>
</comment>
<comment type="catalytic activity">
    <reaction evidence="39">
        <text>ATP + H2O = ADP + phosphate + H(+)</text>
        <dbReference type="Rhea" id="RHEA:13065"/>
        <dbReference type="ChEBI" id="CHEBI:15377"/>
        <dbReference type="ChEBI" id="CHEBI:15378"/>
        <dbReference type="ChEBI" id="CHEBI:30616"/>
        <dbReference type="ChEBI" id="CHEBI:43474"/>
        <dbReference type="ChEBI" id="CHEBI:456216"/>
    </reaction>
    <physiologicalReaction direction="left-to-right" evidence="39">
        <dbReference type="Rhea" id="RHEA:13066"/>
    </physiologicalReaction>
</comment>
<comment type="activity regulation">
    <text evidence="22 34 36 38 39 40 43 44">NLRP1 inflammasome is activated by cleavage by the Protease 3C from various human enteroviruses and rhinoviruses (EV68, EV71, Coxsackievirus B3, HRV-14 and HRV-16): cleavage promotes ubiquitination and degradation of the N-terminal part, releasing the cleaved C-terminal part of the protein (NACHT, LRR and PYD domains-containing protein 1, C-terminus), which polymerizes and forms the NLRP1 inflammasome (PubMed:33093214, PubMed:33410748). Activated double-stranded RNA: positive-strand RNA viruses such as Semliki forest virus and long dsRNA activate the NLRP1 inflammasome (PubMed:33243852). In contrast to its mouse ortholog, not activated by Bacillus anthracis lethal toxin (PubMed:19651869). NLRP1 inflammasome is inhibited by DPP8 and DPP9, which sequester the C-terminal fragment of NLRP1 (NACHT, LRR and PYD domains-containing protein 1, C-terminus) in a ternary complex, thereby preventing NLRP1 oligomerization and activation (PubMed:30291141, PubMed:31525884, PubMed:33731929, PubMed:33731932). NLRP1 inflammasome is activated by Val-boroPro (Talabostat, PT-100), an inhibitor of dipeptidyl peptidases DPP8 and DPP9 (PubMed:30291141, PubMed:33731929, PubMed:33731932). Val-boroPro relieves inhibition of DPP8 and/or DPP9 by promoting disruption of the ternary complex, releasing its C-terminal part from autoinhibition (PubMed:33731929, PubMed:33731932). ATPase activity is activated by dsRNA-binding but not dsDNA-binding (PubMed:33243852).</text>
</comment>
<comment type="activity regulation">
    <text evidence="47">(Microbial infection) The NLRP1 inflammasome is activated by human herpes virus 8/HHV-8 protein ORF45, which interacts with the N-terminal part of NLRP1 and promotes its translocation into the nucleus, relieving autoinhibition and leading to activation.</text>
</comment>
<comment type="activity regulation">
    <text evidence="46">(Microbial infection) NLRP1 inflammasome is activated by cleavage by the 3C-like proteinase nsp5 from human coronavirus SARS-CoV-2.</text>
</comment>
<comment type="subunit">
    <text evidence="18 19 21 25 30 34 36 39 44">Interacts (via LRR repeats) with BCL2 and BCL2L1 (via the loop between motifs BH4 and BH3); these interactions reduce NLRP1 inflammasome-induced CASP1 activation and IL1B release, possibly by impairing NLRP1 interaction with PYCARD (PubMed:17418785). Interacts with NOD2; this interaction is enhanced in the presence of muramyl dipeptide (MDP) and increases IL1B release (PubMed:18511561). Interacts with EIF2AK2/PKR; this interaction requires EIF2AK2 activity, is accompanied by EIF2AK2 autophosphorylation and promotes inflammasome assembly in response to danger-associated signals (PubMed:22801494). Interacts with MEFV; this interaction targets NLRP1 to degradation by autophagy, hence preventing excessive IL1B- and IL18-mediated inflammation (PubMed:17431422, PubMed:26347139). Binds (via LRR domain) to dsDNA and dsRNA (PubMed:33243852). Interacts with DPP9; leading to inhibit activation of the inflammasome (PubMed:30291141, PubMed:31525884, PubMed:33731932). DPP9 acts via formation of a ternary complex, composed of a DPP9 homodimer, one full-length NLRP1 protein, and one cleaved C-terminus of NLRP1 (NACHT, LRR and PYD domains-containing protein 1, C-terminus) (PubMed:33731932). Interacts with DPP8; leading to inhibit activation of the inflammasome, probably via formation of a ternary complex with DPP8 (PubMed:31525884).</text>
</comment>
<comment type="subunit">
    <molecule>NACHT, LRR and PYD domains-containing protein 1, N-terminus</molecule>
    <text evidence="38">Interacts with the C-terminal part of NLRP1 (NACHT, LRR and PYD domains-containing protein 1, C-terminus) in absence of pathogens and other damage-associated signals.</text>
</comment>
<comment type="subunit">
    <molecule>NACHT, LRR and PYD domains-containing protein 1, C-terminus</molecule>
    <text evidence="11 16 18 24 38 41 42">Interacts with the N-terminal part of NLRP1 (NACHT, LRR and PYD domains-containing protein 1, N-terminus) in absence of pathogens and other damage-associated signals (PubMed:33093214). Homomultimer; forms the NLRP1 inflammasome polymeric complex, a filament composed of homopolymers of this form in response to pathogens and other damage-associated signals (PubMed:33420028, PubMed:33420033). The NLRP1 inflammasome polymeric complex associates with PYCARD/ASC (PubMed:12191486, PubMed:17349957, PubMed:17418785, PubMed:22665479). Interacts (via CARD domain) with PYCARD/ASC (via CARD domain); leading to pro-caspase-1 (proCASP1) recruitment (PubMed:12191486, PubMed:17418785, PubMed:22665479). Pro-caspase-1 (proCASP1) filament formation increases local enzyme concentration, resulting in trans-autocleavage and activation (PubMed:12191486, PubMed:17349957, PubMed:22665479). Active CASP1 then processes IL1B and IL18 precursors, leading to the release of mature cytokines in the extracellular milieu and inflammatory response (PubMed:12191486, PubMed:17349957, PubMed:22665479).</text>
</comment>
<comment type="subunit">
    <text evidence="14">(Microbial infection) Interacts with vaccinia virus protein F1 (PubMed:16439990).</text>
</comment>
<comment type="subunit">
    <molecule>NACHT, LRR and PYD domains-containing protein 1, N-terminus</molecule>
    <text evidence="47">(Microbial infection) Interacts with human herpes virus 8/HHV-8 proteins ORF45; relieving autoinhibition of the NLRP1 inflammasome.</text>
</comment>
<comment type="interaction">
    <interactant intactId="EBI-1220518">
        <id>Q9C000</id>
    </interactant>
    <interactant intactId="EBI-77694">
        <id>P10415</id>
        <label>BCL2</label>
    </interactant>
    <organismsDiffer>false</organismsDiffer>
    <experiments>13</experiments>
</comment>
<comment type="interaction">
    <interactant intactId="EBI-1220518">
        <id>Q9C000</id>
    </interactant>
    <interactant intactId="EBI-78035">
        <id>Q07817</id>
        <label>BCL2L1</label>
    </interactant>
    <organismsDiffer>false</organismsDiffer>
    <experiments>9</experiments>
</comment>
<comment type="interaction">
    <interactant intactId="EBI-1220518">
        <id>Q9C000</id>
    </interactant>
    <interactant intactId="EBI-287195">
        <id>Q07817-1</id>
        <label>BCL2L1</label>
    </interactant>
    <organismsDiffer>false</organismsDiffer>
    <experiments>2</experiments>
</comment>
<comment type="interaction">
    <interactant intactId="EBI-1220518">
        <id>Q9C000</id>
    </interactant>
    <interactant intactId="EBI-516667">
        <id>P29466</id>
        <label>CASP1</label>
    </interactant>
    <organismsDiffer>false</organismsDiffer>
    <experiments>3</experiments>
</comment>
<comment type="interaction">
    <interactant intactId="EBI-1220518">
        <id>Q9C000</id>
    </interactant>
    <interactant intactId="EBI-751215">
        <id>Q9ULZ3</id>
        <label>PYCARD</label>
    </interactant>
    <organismsDiffer>false</organismsDiffer>
    <experiments>5</experiments>
</comment>
<comment type="subcellular location">
    <subcellularLocation>
        <location evidence="18">Cytoplasm</location>
        <location evidence="18">Cytosol</location>
    </subcellularLocation>
    <subcellularLocation>
        <location evidence="15">Cytoplasm</location>
    </subcellularLocation>
    <subcellularLocation>
        <location evidence="15">Nucleus</location>
    </subcellularLocation>
    <text evidence="15">Nucleocytoplasmic distribution in lymphoid organs (probably in T-cells) and in neurons. In epithelial cells, predominantly cytoplasmic.</text>
</comment>
<comment type="subcellular location">
    <molecule>NACHT, LRR and PYD domains-containing protein 1, C-terminus</molecule>
    <subcellularLocation>
        <location evidence="11 24 34 41 42">Inflammasome</location>
    </subcellularLocation>
</comment>
<comment type="subcellular location">
    <molecule>NACHT, LRR and PYD domains-containing protein 1, N-terminus</molecule>
    <subcellularLocation>
        <location evidence="47">Nucleus</location>
    </subcellularLocation>
    <text evidence="47">(Microbial infection) Interaction with human herpes virus 8/HHV-8 proteins ORF45 promotes translocation of the N-terminal part of NLRP1 into the nucleus, relieving autoinhibition of the NLRP1 inflammasome and leading to its activation.</text>
</comment>
<comment type="alternative products">
    <event type="alternative splicing"/>
    <isoform>
        <id>Q9C000-1</id>
        <name>1</name>
        <name evidence="51">NAC beta</name>
        <name evidence="50">DEFCAP-L</name>
        <name evidence="55">NALP1-L</name>
        <sequence type="displayed"/>
    </isoform>
    <isoform>
        <id>Q9C000-2</id>
        <name>2</name>
        <name evidence="51">NAC alpha</name>
        <name evidence="50">DEFCAP-S</name>
        <name evidence="55">NALP1-S</name>
        <name>NLRP1deltaEx14</name>
        <sequence type="described" ref="VSP_004327"/>
    </isoform>
    <isoform>
        <id>Q9C000-3</id>
        <name>3</name>
        <name evidence="51">NAC gamma</name>
        <sequence type="described" ref="VSP_004326 VSP_004327"/>
    </isoform>
    <isoform>
        <id>Q9C000-4</id>
        <name>4</name>
        <name evidence="51">NAC delta</name>
        <sequence type="described" ref="VSP_004326"/>
    </isoform>
    <isoform>
        <id>Q9C000-5</id>
        <name>5</name>
        <sequence type="described" ref="VSP_053803 VSP_053804 VSP_053805"/>
    </isoform>
</comment>
<comment type="tissue specificity">
    <text evidence="9 13 15 26 31">Widely expressed (PubMed:11113115, PubMed:17164409). Abundantly expressed in primary immune cells (isoform 1 and isoform 2), including in neutrophils, monocytes/macrophages, dendritic cells (mostly Langerhans cells), and B- and T-lymphocytes (at protein level) (PubMed:15285719, PubMed:17164409). Strongly expressed in epithelial cells lining the glandular epithelium, such as that of the gastrointestinal tract (stomach, small intestine, colon), the respiratory tract (trachea and bronchi), and the endometrial and endocervical glands, gallbladder, prostate, and breast (at protein level). In testis, expressed in spermatogonia and primary spermatocytes, but not in Sertoli cells (at protein level). In the brain, expressed in neurons, in particular in pyramidal ones and in oligodendrocytes, but not detected in microglia (at protein level) (PubMed:17164409). Expressed in adult and fetal ocular tissues, including in adult and 24-week old fetal choroid, sclera, cornea, and optic nerve, as well as in adult retina and fetal retina/retinal pigment epithelium (PubMed:23349227). Highly expressed in the skin throughout the epidermis and in dermal fibroblasts, in both glabrous skin and plantar skin. It is detected in keratinocytes, but not in melanocytes. Expressed in epidermal appendages such as hair follicles (PubMed:27662089).</text>
</comment>
<comment type="developmental stage">
    <text evidence="9 13 15">Associated with differentiation in stratified epithelia of the skin, esophagus, intestine, and cervix, as well as in the prostate gland. Undetectable in undifferentiated basal cells, but expressed in differentiated luminal secretory cells (PubMed:11113115). Expressed in differentiated macrophages and granulocytes, but not their precursors (at protein level) (PubMed:11113115, PubMed:15285719). In testis, also associated with cell differentiation, with conflicting results. Expressed in spermatogonia and primary spermatocytes, but not in cells from later differentiation stages, including secondary spermatocytes, spermatids, and spermatozoa (at protein level) (PubMed:17164409). Not detected in spermatocytes, nor spermatids, and strongly expressed in spermatozoa (at protein level) (PubMed:11113115).</text>
</comment>
<comment type="induction">
    <text evidence="27 29">Up-regulated by ATF4 during endoplasmic reticulum (ER) stress response (PubMed:26086088). Up-regulated in arterial endothelial cells exposed to plasma from patients with peripheral arterial disease, but not to plasma from healthy controls (PubMed:24439873).</text>
</comment>
<comment type="domain">
    <text evidence="11 16 24">The CARD domain, rather than the pyrin domain, is involved in the interaction with PYCARD, CASP1 and CASP5.</text>
</comment>
<comment type="domain">
    <text evidence="48">The ZAKalpha motifs are recognized and phosphorylated by isoform ZAKalpha of MAP3K20.</text>
</comment>
<comment type="domain">
    <text evidence="2 11 16 39">The leucine-rich repeat (LRR) domain may be involved in autoinhibition in the absence of activating signal, possibly through intramolecular interaction with the NACHT domain. Serves as the predominant binding domain for dsRNA and dsDNA (PubMed:33243852).</text>
</comment>
<comment type="domain">
    <text evidence="1 23 24">The FIIND (domain with function to find) region is involved in homomerization, but not in CASP1-binding (By similarity). Autocatalytic cleavage in this region occurs constitutively, prior to activation signals, and is required for inflammasome activity (IL1B release), possibly by facilitating CASP1 binding (PubMed:22087307, PubMed:22665479). Both N- and C-terminal fragments remain associated (PubMed:22087307, PubMed:22665479).</text>
</comment>
<comment type="domain">
    <text evidence="39">The pyrin domain mediates an autoinhibitory function, potentially acting as a threshold modulator, which allows NLRP1 to discriminate long from short dsRNA. Inhibits ATPase activity of the NATCH domain.</text>
</comment>
<comment type="domain">
    <molecule>NACHT, LRR and PYD domains-containing protein 1, C-terminus</molecule>
    <text evidence="41 42">The C-terminal part of NLRP1 oligomerizes to form the core of the NLRP1 inflammasome filament: in the filament, the CARD domains form a central helical filaments that are promoted by oligomerized, but flexibly linked, UPA regions surrounding the filaments (PubMed:33420028, PubMed:33420033). The UPA region reduces the threshold needed for filament formation and signaling (PubMed:33420028, PubMed:33420033). Must recruit the adapter PYCARD/ASC to facilitate CASP1 interaction and polymerization (PubMed:33420033).</text>
</comment>
<comment type="domain">
    <text evidence="39">Upon dsRNA-binding via its LRR domain, NACHT domain gains ATPase activity which is inhibited by the pyrin domain.</text>
</comment>
<comment type="PTM">
    <molecule>NACHT, LRR and PYD domains-containing protein 1</molecule>
    <text evidence="23 24 38">Autocatalytically cleaved (PubMed:22087307, PubMed:22665479, PubMed:33093214). Autocatalytic cleavage in FIIND region occurs constitutively, prior to activation signals, and is required for inflammasome activity (IL1B release), possibly by facilitating CASP1 binding (PubMed:22087307, PubMed:22665479, PubMed:33093214). Both N- and C-terminal parts remain associated non-covalently (PubMed:22087307, PubMed:22665479, PubMed:33093214).</text>
</comment>
<comment type="PTM">
    <molecule>NACHT, LRR and PYD domains-containing protein 1, N-terminus</molecule>
    <text evidence="38">Ubiquitinated by the cullin:ZER1/ZYG11B complex in response to pathogen-associated signals, leading to its degradation by the proteasome and subsequent release of the cleaved C-terminal part of the protein (NACHT, LRR and PYD domains-containing protein 1, C-terminus), which polymerizes and forms the NLRP1 inflammasome.</text>
</comment>
<comment type="PTM">
    <text evidence="48">Phosphorylated by MAP3K20 isoform ZAKalpha, MAPK11 and MAPK14 in response to UV-B irradiation and ribosome collisions, promoting activation of the NLRP1 inflammasome and pyroptosis.</text>
</comment>
<comment type="PTM">
    <text evidence="38 40">(Microbial infection) Cleaved between Gln-130 and Gly-131 by the Protease 3C from various human enteroviruses and rhinoviruses (EV68, EV71, Coxsackievirus B3, HRV-14 and HRV-16) (PubMed:33093214, PubMed:33410748). This cleavage triggers N-glycine-mediated proteasomal degradation of the autoinhibitory NLRP1 N-terminal fragment via the cullin:ZER1/ZYG11B complex which liberates the activating C-terminal fragment and activates NLRP1 inflammasome (PubMed:33093214).</text>
</comment>
<comment type="PTM">
    <text evidence="46">(Microbial infection) Cleaved between Gln-333 and Gly-334 by the 3C-like proteinase nsp5 from human coronavirus SARS-CoV-2 (PubMed:35594856). This cleavage liberates the activating C-terminal fragment and activates NLRP1 inflammasome, leading to downstream activation of GSDME and lung epithelial cell death (PubMed:35594856).</text>
</comment>
<comment type="disease" evidence="17">
    <disease id="DI-02736">
        <name>Vitiligo-associated multiple autoimmune disease 1</name>
        <acronym>VAMAS1</acronym>
        <description>A disorder characterized by the association of vitiligo with several autoimmune and autoinflammatory diseases including autoimmune thyroid disease, rheumatoid arthritis and systemic lupus erythematosus.</description>
        <dbReference type="MIM" id="606579"/>
    </disease>
    <text>Disease susceptibility is associated with variants affecting the gene represented in this entry.</text>
</comment>
<comment type="disease" evidence="26 31 38">
    <disease id="DI-03762">
        <name>Palmoplantar carcinoma, multiple self-healing</name>
        <acronym>MSPC</acronym>
        <description>An autosomal dominant disease characterized by keratopathy with neovascularization, bilateral corneal opacification, palmoplantar hyperkeratosis, dyshidrosis, dystrophic nails, and recurrent keratoacanthomas in palmoplantar skin as well as in conjunctival and corneal epithelia. In addition, patients experience a high susceptibility to malignant squamous cell carcinoma.</description>
        <dbReference type="MIM" id="615225"/>
    </disease>
    <text>The disease is caused by variants affecting the gene represented in this entry.</text>
</comment>
<comment type="disease" evidence="32 34 44">
    <disease id="DI-04967">
        <name>Autoinflammation with arthritis and dyskeratosis</name>
        <acronym>AIADK</acronym>
        <description>A disorder characterized by recurrent fever, diffuse skin dyskeratosis, autoinflammation, autoimmunity, arthritis and high transitional B-cell level. Inheritance can be autosomal dominant or autosomal recessive.</description>
        <dbReference type="MIM" id="617388"/>
    </disease>
    <text>The disease may be caused by variants affecting the gene represented in this entry.</text>
</comment>
<comment type="disease" evidence="35">
    <disease id="DI-05784">
        <name>Respiratory papillomatosis, juvenile recurrent, congenital</name>
        <acronym>JRRP</acronym>
        <description>An autosomal recessive disease characterized by recurrent growth of papillomas in the respiratory tract, and onset in early childhood. Papillomas are most commonly found in the larynx but may occur anywhere from the mouth to the bronchi. Children typically present within the first years of life with hoarseness or, in more severe cases, respiratory distress or stridor and airway obstruction. JRRP is associated with infection of the upper airway by human papillomaviruses of the alpha genus. The infection is thought to occur by vertical transmission at birth.</description>
        <dbReference type="MIM" id="618803"/>
    </disease>
    <text>The disease may be caused by variants affecting the gene represented in this entry.</text>
</comment>
<comment type="miscellaneous">
    <text evidence="1">In macrophages and dendritic cells, NLRP1 inflammasome activation of CASP1 and IL1B maturation can be dampened by direct contact with activated effector and memory T-cells. This effect may be mediated by hexameric TNF ligands, such as CD40LG.</text>
</comment>
<comment type="similarity">
    <text evidence="60">Belongs to the NLRP family.</text>
</comment>
<comment type="sequence caution" evidence="60">
    <conflict type="erroneous initiation">
        <sequence resource="EMBL-CDS" id="BAA76770"/>
    </conflict>
    <text>Extended N-terminus.</text>
</comment>
<comment type="sequence caution" evidence="60">
    <conflict type="miscellaneous discrepancy">
        <sequence resource="EMBL-CDS" id="BAB15469"/>
    </conflict>
    <text>Probable cloning artifact.</text>
</comment>
<comment type="sequence caution" evidence="60">
    <conflict type="miscellaneous discrepancy">
        <sequence resource="EMBL-CDS" id="BAB15470"/>
    </conflict>
    <text>Probable cloning artifact.</text>
</comment>
<feature type="chain" id="PRO_0000096710" description="NACHT, LRR and PYD domains-containing protein 1">
    <location>
        <begin position="1"/>
        <end position="1473"/>
    </location>
</feature>
<feature type="chain" id="PRO_0000452851" description="NACHT, LRR and PYD domains-containing protein 1, N-terminus" evidence="61">
    <location>
        <begin position="1"/>
        <end position="1212"/>
    </location>
</feature>
<feature type="chain" id="PRO_0000452852" description="NACHT, LRR and PYD domains-containing protein 1, C-terminus" evidence="61">
    <location>
        <begin position="1213"/>
        <end position="1473"/>
    </location>
</feature>
<feature type="domain" description="Pyrin" evidence="4">
    <location>
        <begin position="1"/>
        <end position="92"/>
    </location>
</feature>
<feature type="domain" description="NACHT" evidence="5">
    <location>
        <begin position="328"/>
        <end position="637"/>
    </location>
</feature>
<feature type="repeat" description="LRR 1">
    <location>
        <begin position="809"/>
        <end position="830"/>
    </location>
</feature>
<feature type="repeat" description="LRR 2">
    <location>
        <begin position="838"/>
        <end position="858"/>
    </location>
</feature>
<feature type="repeat" description="LRR 3">
    <location>
        <begin position="866"/>
        <end position="887"/>
    </location>
</feature>
<feature type="repeat" description="LRR 4">
    <location>
        <begin position="895"/>
        <end position="915"/>
    </location>
</feature>
<feature type="repeat" description="LRR 5">
    <location>
        <begin position="923"/>
        <end position="944"/>
    </location>
</feature>
<feature type="repeat" description="LRR 6">
    <location>
        <begin position="950"/>
        <end position="973"/>
    </location>
</feature>
<feature type="domain" description="FIIND" evidence="6">
    <location>
        <begin position="1079"/>
        <end position="1364"/>
    </location>
</feature>
<feature type="domain" description="CARD" evidence="3">
    <location>
        <begin position="1374"/>
        <end position="1463"/>
    </location>
</feature>
<feature type="region of interest" description="Disordered" evidence="7">
    <location>
        <begin position="90"/>
        <end position="113"/>
    </location>
</feature>
<feature type="region of interest" description="Disordered" evidence="7">
    <location>
        <begin position="160"/>
        <end position="254"/>
    </location>
</feature>
<feature type="region of interest" description="Disordered" evidence="7">
    <location>
        <begin position="991"/>
        <end position="1017"/>
    </location>
</feature>
<feature type="region of interest" description="ZU5" evidence="57">
    <location>
        <begin position="1079"/>
        <end position="1212"/>
    </location>
</feature>
<feature type="region of interest" description="UPA" evidence="57">
    <location>
        <begin position="1213"/>
        <end position="1364"/>
    </location>
</feature>
<feature type="short sequence motif" description="ZAKalpha motif 1" evidence="48">
    <location>
        <begin position="111"/>
        <end position="117"/>
    </location>
</feature>
<feature type="short sequence motif" description="ZAKalpha motif 2" evidence="48">
    <location>
        <begin position="177"/>
        <end position="183"/>
    </location>
</feature>
<feature type="compositionally biased region" description="Polar residues" evidence="7">
    <location>
        <begin position="170"/>
        <end position="182"/>
    </location>
</feature>
<feature type="compositionally biased region" description="Basic and acidic residues" evidence="7">
    <location>
        <begin position="218"/>
        <end position="231"/>
    </location>
</feature>
<feature type="binding site" evidence="5">
    <location>
        <begin position="334"/>
        <end position="341"/>
    </location>
    <ligand>
        <name>ATP</name>
        <dbReference type="ChEBI" id="CHEBI:30616"/>
    </ligand>
</feature>
<feature type="site" description="(Microbial infection) Cleavage; by human rhinovirus 14 (HRV-14) Protease 3C" evidence="38 40">
    <location>
        <begin position="130"/>
        <end position="131"/>
    </location>
</feature>
<feature type="site" description="(Microbial infection) Cleavage; by coronavirus SARS-CoV-2 proteinase nsp5" evidence="46">
    <location>
        <begin position="333"/>
        <end position="334"/>
    </location>
</feature>
<feature type="site" description="Cleavage; by autolysis" evidence="6 24">
    <location>
        <begin position="1212"/>
        <end position="1213"/>
    </location>
</feature>
<feature type="modified residue" description="Phosphoserine; by MAPK11 and MAPK14" evidence="48">
    <location>
        <position position="93"/>
    </location>
</feature>
<feature type="modified residue" description="Phosphoserine; by MAPK11 and MAPK14" evidence="48">
    <location>
        <position position="99"/>
    </location>
</feature>
<feature type="modified residue" description="Phosphoserine; by MAPK11 and MAPK14" evidence="48">
    <location>
        <position position="101"/>
    </location>
</feature>
<feature type="modified residue" description="Phosphoserine; by MAPK14" evidence="48">
    <location>
        <position position="107"/>
    </location>
</feature>
<feature type="modified residue" description="Phosphothreonine; by MAPK11, MAPK14 and MAP3K20" evidence="48">
    <location>
        <position position="112"/>
    </location>
</feature>
<feature type="modified residue" description="Phosphoserine; by MAP3K20" evidence="48">
    <location>
        <position position="113"/>
    </location>
</feature>
<feature type="modified residue" description="Phosphothreonine; by MAP3K20" evidence="48">
    <location>
        <position position="114"/>
    </location>
</feature>
<feature type="modified residue" description="Phosphothreonine; by MAP3K20" evidence="48">
    <location>
        <position position="129"/>
    </location>
</feature>
<feature type="modified residue" description="Phosphoserine; by MAP3K20" evidence="48">
    <location>
        <position position="132"/>
    </location>
</feature>
<feature type="modified residue" description="Phosphoserine; by MAPK14" evidence="48">
    <location>
        <position position="163"/>
    </location>
</feature>
<feature type="modified residue" description="Phosphoserine; by MAPK11 and MAPk14" evidence="48">
    <location>
        <position position="168"/>
    </location>
</feature>
<feature type="modified residue" description="Phosphoserine; by MAPK11 and MAPK14" evidence="48">
    <location>
        <position position="170"/>
    </location>
</feature>
<feature type="modified residue" description="Phosphoserine; by MAPK11" evidence="48">
    <location>
        <position position="173"/>
    </location>
</feature>
<feature type="modified residue" description="Phosphothreonine; by MAPK11" evidence="48">
    <location>
        <position position="178"/>
    </location>
</feature>
<feature type="modified residue" description="Phosphoserine; by MAPK11 and MAP3K20" evidence="48">
    <location>
        <position position="179"/>
    </location>
</feature>
<feature type="modified residue" description="Phosphothreonine; by MAPK11 and MAP3K20" evidence="48">
    <location>
        <position position="180"/>
    </location>
</feature>
<feature type="splice variant" id="VSP_004326" description="In isoform 3 and isoform 4." evidence="51">
    <location>
        <begin position="958"/>
        <end position="987"/>
    </location>
</feature>
<feature type="splice variant" id="VSP_053803" description="In isoform 5." evidence="54 56">
    <original>A</original>
    <variation>AGKSH</variation>
    <location>
        <position position="1044"/>
    </location>
</feature>
<feature type="splice variant" id="VSP_004327" description="In isoform 2 and isoform 3." evidence="49 50 51 52 53">
    <location>
        <begin position="1262"/>
        <end position="1305"/>
    </location>
</feature>
<feature type="splice variant" id="VSP_053804" description="In isoform 5." evidence="54 56">
    <original>DLMPATTLIPPARIAVPS</original>
    <variation>RNTSQPWNLRCNRDARRY</variation>
    <location>
        <begin position="1354"/>
        <end position="1371"/>
    </location>
</feature>
<feature type="splice variant" id="VSP_053805" description="In isoform 5." evidence="54 56">
    <location>
        <begin position="1372"/>
        <end position="1473"/>
    </location>
</feature>
<feature type="sequence variant" id="VAR_078798" description="In MSPC; increased NLRP1-inflammasome complex assembly; altered protein folding; dbSNP:rs1057519492." evidence="31">
    <original>A</original>
    <variation>T</variation>
    <location>
        <position position="54"/>
    </location>
</feature>
<feature type="sequence variant" id="VAR_078799" description="In MSPC; increased NLRP1-inflammasome complex assembly; altered protein folding; dbSNP:rs1057519493." evidence="31">
    <original>A</original>
    <variation>V</variation>
    <location>
        <position position="66"/>
    </location>
</feature>
<feature type="sequence variant" id="VAR_069901" description="In MSPC; destabilization of the N-terminal fragment; dbSNP:rs397514692." evidence="26 38">
    <original>M</original>
    <variation>T</variation>
    <location>
        <position position="77"/>
    </location>
</feature>
<feature type="sequence variant" id="VAR_033239" description="Risk factor for VAMAS1; dbSNP:rs12150220." evidence="10 17">
    <original>L</original>
    <variation>H</variation>
    <location>
        <position position="155"/>
    </location>
</feature>
<feature type="sequence variant" id="VAR_024238" description="In dbSNP:rs11651595." evidence="10">
    <original>T</original>
    <variation>S</variation>
    <location>
        <position position="246"/>
    </location>
</feature>
<feature type="sequence variant" id="VAR_021886" description="In dbSNP:rs3744718.">
    <original>R</original>
    <variation>Q</variation>
    <location>
        <position position="404"/>
    </location>
</feature>
<feature type="sequence variant" id="VAR_078800" description="In AIADK; uncertain significance; dbSNP:rs776245016." evidence="32">
    <original>R</original>
    <variation>W</variation>
    <location>
        <position position="726"/>
    </location>
</feature>
<feature type="sequence variant" id="VAR_083844" description="In JRRP; gain-of-function variant resulting in spontaneous inflammasome activation; increased NLRP1-inflammasome complex assembly." evidence="35">
    <original>T</original>
    <variation>N</variation>
    <location>
        <position position="755"/>
    </location>
</feature>
<feature type="sequence variant" id="VAR_078801" description="In MSPC; increased NLRP1-inflammasome complex assembly." evidence="31">
    <location>
        <begin position="787"/>
        <end position="843"/>
    </location>
</feature>
<feature type="sequence variant" id="VAR_033240" description="In dbSNP:rs11657747." evidence="10">
    <original>T</original>
    <variation>M</variation>
    <location>
        <position position="878"/>
    </location>
</feature>
<feature type="sequence variant" id="VAR_024239" description="In dbSNP:rs2301582.">
    <original>V</original>
    <variation>M</variation>
    <location>
        <position position="1059"/>
    </location>
</feature>
<feature type="sequence variant" id="VAR_033241" description="In dbSNP:rs9907167.">
    <original>H</original>
    <variation>Y</variation>
    <location>
        <position position="1069"/>
    </location>
</feature>
<feature type="sequence variant" id="VAR_033242" description="No effect on autocatalytic processing, nor on IL1B release; dbSNP:rs35596958." evidence="10 24">
    <original>M</original>
    <variation>V</variation>
    <location>
        <position position="1119"/>
    </location>
</feature>
<feature type="sequence variant" id="VAR_033243" description="Increased autocatalytic processing and IL1B release; dbSNP:rs11651270." evidence="10 20 24">
    <original>M</original>
    <variation>V</variation>
    <location>
        <position position="1184"/>
    </location>
</feature>
<feature type="sequence variant" id="VAR_078802" description="In AIADK; decreased interaction with DPP9, leading to increased inflammasome activity; dbSNP:rs1057524876." evidence="32 34 44">
    <original>P</original>
    <variation>R</variation>
    <location>
        <position position="1214"/>
    </location>
</feature>
<feature type="sequence variant" id="VAR_033244" description="In dbSNP:rs11653832." evidence="10">
    <original>V</original>
    <variation>L</variation>
    <location>
        <position position="1241"/>
    </location>
</feature>
<feature type="sequence variant" id="VAR_020437" description="In dbSNP:rs2137722." evidence="10">
    <original>R</original>
    <variation>C</variation>
    <location>
        <position position="1366"/>
    </location>
</feature>
<feature type="mutagenesis site" description="No effect on cleavage by HRV-14 Protease 3C." evidence="38">
    <original>Q</original>
    <variation>A</variation>
    <location>
        <position position="76"/>
    </location>
</feature>
<feature type="mutagenesis site" description="No effect on cleavage by HRV-14 Protease 3C." evidence="38">
    <original>Q</original>
    <variation>A</variation>
    <location>
        <position position="85"/>
    </location>
</feature>
<feature type="mutagenesis site" description="No effect on cleavage by HRV-14 Protease 3C." evidence="38">
    <original>Q</original>
    <variation>A</variation>
    <location>
        <position position="87"/>
    </location>
</feature>
<feature type="mutagenesis site" description="No effect on cleavage by HRV-14 Protease 3C." evidence="38">
    <original>Q</original>
    <variation>A</variation>
    <location>
        <position position="110"/>
    </location>
</feature>
<feature type="mutagenesis site" description="Inhibits cleavage by HRV-14 Protease 3C." evidence="38">
    <original>Q</original>
    <variation>A</variation>
    <location>
        <position position="130"/>
    </location>
</feature>
<feature type="mutagenesis site" description="Inhibits cleavage by Protease 3C from Coxsackievirus B3 and HRV-14." evidence="40">
    <original>Q</original>
    <variation>P</variation>
    <location>
        <position position="130"/>
    </location>
</feature>
<feature type="mutagenesis site" description="No effect on cleavage by HRV-14 Protease 3C." evidence="38">
    <original>Q</original>
    <variation>A</variation>
    <location>
        <position position="139"/>
    </location>
</feature>
<feature type="mutagenesis site" description="No effect on cleavage by HRV-14 Protease 3C." evidence="38">
    <original>Q</original>
    <variation>A</variation>
    <location>
        <position position="158"/>
    </location>
</feature>
<feature type="mutagenesis site" description="No effect on cleavage by HRV-14 Protease 3C." evidence="38">
    <original>Q</original>
    <variation>A</variation>
    <location>
        <position position="171"/>
    </location>
</feature>
<feature type="mutagenesis site" description="In 3A mutant; abolished activation of the NLRP1 inflammasome in response to UV-B irradiation and ribosome collisions." evidence="48">
    <original>TST</original>
    <variation>AAA</variation>
    <location>
        <begin position="178"/>
        <end position="180"/>
    </location>
</feature>
<feature type="mutagenesis site" description="No effect on cleavage by HRV-14 Protease 3C." evidence="38">
    <original>Q</original>
    <variation>A</variation>
    <location>
        <position position="191"/>
    </location>
</feature>
<feature type="mutagenesis site" description="No effect on cleavage by HRV-14 Protease 3C." evidence="38">
    <original>Q</original>
    <variation>A</variation>
    <location>
        <position position="199"/>
    </location>
</feature>
<feature type="mutagenesis site" description="No effect on cleavage by HRV-14 Protease 3C." evidence="38">
    <original>Q</original>
    <variation>A</variation>
    <location>
        <position position="205"/>
    </location>
</feature>
<feature type="mutagenesis site" description="Abolished cleavage by the 3C-like proteinase nsp5 from human coronavirus SARS-CoV-2." evidence="46">
    <original>Q</original>
    <variation>A</variation>
    <location>
        <position position="333"/>
    </location>
</feature>
<feature type="mutagenesis site" description="Loss of ATP binding." evidence="12">
    <original>GK</original>
    <variation>EA</variation>
    <location>
        <begin position="339"/>
        <end position="340"/>
    </location>
</feature>
<feature type="mutagenesis site" description="No effect." evidence="8">
    <original>K</original>
    <variation>L</variation>
    <variation>S</variation>
    <location>
        <position position="340"/>
    </location>
</feature>
<feature type="mutagenesis site" description="Complete loss of autocatalytic processing and of IL1B release. Autocatalytic processing cannot be restored by treatment with hydroxylamine." evidence="24">
    <original>H</original>
    <variation>A</variation>
    <location>
        <position position="1168"/>
    </location>
</feature>
<feature type="mutagenesis site" description="Complete loss of autocatalytic processing and of IL1B release. Autocatalytic processing can be restored by treatment with hydroxylamine." evidence="24">
    <original>H</original>
    <variation>A</variation>
    <location>
        <position position="1186"/>
    </location>
</feature>
<feature type="mutagenesis site" description="Reduced autocatalytic processing and reduced interaction with DPP9." evidence="44">
    <original>LL</original>
    <variation>EE</variation>
    <location>
        <begin position="1193"/>
        <end position="1194"/>
    </location>
</feature>
<feature type="mutagenesis site" description="Partial loss of autocatalytic processing and of IL1B release." evidence="24">
    <original>S</original>
    <variation>A</variation>
    <location>
        <position position="1211"/>
    </location>
</feature>
<feature type="mutagenesis site" description="Complete loss of autocatalytic processing and of IL1B release." evidence="24 38">
    <original>F</original>
    <variation>A</variation>
    <location>
        <position position="1212"/>
    </location>
</feature>
<feature type="mutagenesis site" description="Complete loss of autocatalytic processing and of IL1B release. Autocatalytic processing cannot be restored by treatment with hydroxylamine. Abolished interaction with DPP9. Loss of activation by dsRNA or positive-strand RNA virus." evidence="23 24 36 37 39 44">
    <original>S</original>
    <variation>A</variation>
    <location>
        <position position="1213"/>
    </location>
</feature>
<feature type="mutagenesis site" description="Complete loss of autocatalytic processing, which can be restored by treatment with hydroxylamine." evidence="24">
    <original>S</original>
    <variation>C</variation>
    <location>
        <position position="1213"/>
    </location>
</feature>
<feature type="mutagenesis site" description="Partial loss of autocatalytic processing (50%) and of IL1B release (50%)." evidence="24">
    <original>P</original>
    <variation>A</variation>
    <location>
        <position position="1214"/>
    </location>
</feature>
<feature type="mutagenesis site" description="Slightly reduced formation of an inflammasome filament together with PYCARD/ASC." evidence="41">
    <original>R</original>
    <variation>D</variation>
    <location>
        <position position="1240"/>
    </location>
</feature>
<feature type="mutagenesis site" description="Complete loss of autocatalytic processing and IL1B release. Autocatalytic processing cannot be restored by treatment with hydroxylamine." evidence="24">
    <original>H</original>
    <variation>A</variation>
    <location>
        <position position="1249"/>
    </location>
</feature>
<feature type="mutagenesis site" description="Slightly reduced formation of an inflammasome filament together with PYCARD/ASC." evidence="41">
    <original>RK</original>
    <variation>DD</variation>
    <location>
        <begin position="1260"/>
        <end position="1261"/>
    </location>
</feature>
<feature type="mutagenesis site" description="Abolished ability to form the NLRP1 inflammasome." evidence="44">
    <original>H</original>
    <variation>G</variation>
    <location>
        <position position="1276"/>
    </location>
</feature>
<feature type="mutagenesis site" description="Abolished ability to form the NLRP1 inflammasome." evidence="44">
    <original>K</original>
    <variation>E</variation>
    <location>
        <position position="1277"/>
    </location>
</feature>
<feature type="mutagenesis site" description="Abolished formation of an inflammasome filament together with PYCARD/ASC." evidence="41">
    <original>PP</original>
    <variation>AG</variation>
    <location>
        <begin position="1278"/>
        <end position="1279"/>
    </location>
</feature>
<feature type="mutagenesis site" description="Impaired ability to form the NLRP1 inflammasome." evidence="43">
    <original>P</original>
    <variation>E</variation>
    <location>
        <position position="1278"/>
    </location>
</feature>
<feature type="mutagenesis site" description="Impaired ability to form the NLRP1 inflammasome." evidence="43">
    <original>L</original>
    <variation>E</variation>
    <location>
        <position position="1281"/>
    </location>
</feature>
<feature type="mutagenesis site" description="Slightly reduced formation of an inflammasome filament together with PYCARD/ASC." evidence="41">
    <original>F</original>
    <variation>A</variation>
    <location>
        <position position="1320"/>
    </location>
</feature>
<feature type="mutagenesis site" description="Abolished ability to form the NLRP1 inflammasome." evidence="44">
    <original>E</original>
    <variation>R</variation>
    <location>
        <position position="1322"/>
    </location>
</feature>
<feature type="mutagenesis site" description="Abolished formation of an inflammasome filament together with PYCARD/ASC." evidence="41">
    <original>D</original>
    <variation>R</variation>
    <location>
        <position position="1383"/>
    </location>
</feature>
<feature type="mutagenesis site" description="Abolished formation of an inflammasome filament together with PYCARD/ASC." evidence="41">
    <original>R</original>
    <variation>D</variation>
    <location>
        <position position="1386"/>
    </location>
</feature>
<feature type="mutagenesis site" description="Does not affect formation of an inflammasome filament together with PYCARD/ASC." evidence="41">
    <original>E</original>
    <variation>R</variation>
    <location>
        <position position="1387"/>
    </location>
</feature>
<feature type="mutagenesis site" description="Does not affect formation of an inflammasome filament together with PYCARD/ASC." evidence="41">
    <original>Q</original>
    <variation>D</variation>
    <location>
        <position position="1388"/>
    </location>
</feature>
<feature type="mutagenesis site" description="Abolished formation of an inflammasome filament together with PYCARD/ASC." evidence="41">
    <original>R</original>
    <variation>D</variation>
    <location>
        <position position="1392"/>
    </location>
</feature>
<feature type="mutagenesis site" description="Impaired ability to induce programmed cell death." evidence="42">
    <original>R</original>
    <variation>E</variation>
    <location>
        <position position="1392"/>
    </location>
</feature>
<feature type="mutagenesis site" description="Abolished formation of an inflammasome filament together with PYCARD/ASC." evidence="41">
    <original>S</original>
    <variation>R</variation>
    <location>
        <position position="1395"/>
    </location>
</feature>
<feature type="mutagenesis site" description="Impaired ability to induce programmed cell death. Abolished formation of an inflammasome filament together with PYCARD/ASC." evidence="41 42">
    <original>E</original>
    <variation>R</variation>
    <location>
        <position position="1397"/>
    </location>
</feature>
<feature type="mutagenesis site" description="Impaired ability to induce programmed cell death." evidence="42">
    <original>D</original>
    <variation>R</variation>
    <location>
        <position position="1401"/>
    </location>
</feature>
<feature type="mutagenesis site" description="Abolished formation of an inflammasome filament together with PYCARD/ASC." evidence="41">
    <original>K</original>
    <variation>D</variation>
    <location>
        <position position="1402"/>
    </location>
</feature>
<feature type="mutagenesis site" description="Abolished formation of an inflammasome filament together with PYCARD/ASC." evidence="41">
    <original>K</original>
    <variation>E</variation>
    <location>
        <position position="1402"/>
    </location>
</feature>
<feature type="mutagenesis site" description="Abolished formation of an inflammasome filament together with PYCARD/ASC." evidence="41">
    <original>H</original>
    <variation>D</variation>
    <location>
        <position position="1404"/>
    </location>
</feature>
<feature type="mutagenesis site" description="Does not affect formation of an inflammasome filament together with PYCARD/ASC." evidence="41">
    <original>Q</original>
    <variation>R</variation>
    <location>
        <position position="1406"/>
    </location>
</feature>
<feature type="mutagenesis site" description="Abolished formation of an inflammasome filament together with PYCARD/ASC." evidence="41">
    <original>Q</original>
    <variation>R</variation>
    <location>
        <position position="1410"/>
    </location>
</feature>
<feature type="mutagenesis site" description="Impaired ability to induce programmed cell death. Abolished formation of an inflammasome filament together with PYCARD/ASC." evidence="41 42">
    <original>E</original>
    <variation>R</variation>
    <location>
        <position position="1411"/>
    </location>
</feature>
<feature type="mutagenesis site" description="Abolished formation of an inflammasome filament together with PYCARD/ASC." evidence="41">
    <original>Y</original>
    <variation>R</variation>
    <location>
        <position position="1413"/>
    </location>
</feature>
<feature type="mutagenesis site" description="Impaired ability to induce programmed cell death. Abolished formation of an inflammasome filament together with PYCARD/ASC." evidence="41 42">
    <original>E</original>
    <variation>R</variation>
    <location>
        <position position="1414"/>
    </location>
</feature>
<feature type="mutagenesis site" description="Abolished formation of an inflammasome filament together with PYCARD/ASC." evidence="41">
    <original>R</original>
    <variation>D</variation>
    <location>
        <position position="1415"/>
    </location>
</feature>
<feature type="mutagenesis site" description="Abolished formation of an inflammasome filament together with PYCARD/ASC." evidence="41">
    <original>N</original>
    <variation>E</variation>
    <location>
        <position position="1420"/>
    </location>
</feature>
<feature type="mutagenesis site" description="Abolished formation of an inflammasome filament together with PYCARD/ASC." evidence="41">
    <original>R</original>
    <variation>E</variation>
    <location>
        <position position="1422"/>
    </location>
</feature>
<feature type="mutagenesis site" description="Abolished formation of an inflammasome filament together with PYCARD/ASC." evidence="41">
    <original>R</original>
    <variation>D</variation>
    <location>
        <position position="1427"/>
    </location>
</feature>
<feature type="mutagenesis site" description="Impaired ability to induce programmed cell death." evidence="42">
    <original>R</original>
    <variation>E</variation>
    <location>
        <position position="1427"/>
    </location>
</feature>
<feature type="mutagenesis site" description="Does not affect formation of an inflammasome filament together with PYCARD/ASC." evidence="41">
    <original>K</original>
    <variation>E</variation>
    <location>
        <position position="1428"/>
    </location>
</feature>
<feature type="mutagenesis site" description="Does not affect formation of an inflammasome filament together with PYCARD/ASC." evidence="41">
    <original>Q</original>
    <variation>R</variation>
    <location>
        <position position="1434"/>
    </location>
</feature>
<feature type="mutagenesis site" description="Abolished formation of an inflammasome filament together with PYCARD/ASC." evidence="41">
    <original>D</original>
    <variation>R</variation>
    <location>
        <position position="1437"/>
    </location>
</feature>
<feature type="mutagenesis site" description="Abolished inflammasome filament formation. Impaired ability to induce programmed cell death, but retains CAPS1 processing." evidence="42">
    <original>Y</original>
    <variation>A</variation>
    <location>
        <position position="1445"/>
    </location>
</feature>
<feature type="mutagenesis site" description="Does not affect formation of an inflammasome filament together with PYCARD/ASC." evidence="41">
    <original>K</original>
    <variation>D</variation>
    <location>
        <position position="1449"/>
    </location>
</feature>
<feature type="mutagenesis site" description="Abolished formation of an inflammasome filament together with PYCARD/ASC." evidence="41">
    <original>E</original>
    <variation>R</variation>
    <location>
        <position position="1450"/>
    </location>
</feature>
<feature type="mutagenesis site" description="Abolished formation of an inflammasome filament together with PYCARD/ASC." evidence="41">
    <original>T</original>
    <variation>R</variation>
    <location>
        <position position="1451"/>
    </location>
</feature>
<feature type="mutagenesis site" description="Abolished formation of an inflammasome filament together with PYCARD/ASC." evidence="41">
    <original>H</original>
    <variation>D</variation>
    <location>
        <position position="1454"/>
    </location>
</feature>
<feature type="mutagenesis site" description="Abolished formation of an inflammasome filament together with PYCARD/ASC." evidence="41">
    <original>H</original>
    <variation>E</variation>
    <location>
        <position position="1454"/>
    </location>
</feature>
<feature type="mutagenesis site" description="Does not affect ability to induce programmed cell death." evidence="42">
    <original>M</original>
    <variation>A</variation>
    <location>
        <position position="1457"/>
    </location>
</feature>
<feature type="mutagenesis site" description="Abolished formation of an inflammasome filament together with PYCARD/ASC." evidence="41">
    <original>E</original>
    <variation>R</variation>
    <location>
        <position position="1458"/>
    </location>
</feature>
<feature type="mutagenesis site" description="Does not affect ability to induce programmed cell death." evidence="42">
    <original>W</original>
    <variation>A</variation>
    <location>
        <position position="1460"/>
    </location>
</feature>
<feature type="mutagenesis site" description="Does not affect formation of an inflammasome filament together with PYCARD/ASC." evidence="41 42">
    <original>E</original>
    <variation>R</variation>
    <location>
        <position position="1461"/>
    </location>
</feature>
<feature type="sequence conflict" description="In Ref. 7; AAH51787." evidence="60" ref="7">
    <original>P</original>
    <variation>S</variation>
    <location>
        <position position="287"/>
    </location>
</feature>
<feature type="sequence conflict" description="In Ref. 1; AAG15254." evidence="60" ref="1">
    <original>T</original>
    <variation>S</variation>
    <location>
        <position position="782"/>
    </location>
</feature>
<feature type="sequence conflict" description="In Ref. 1; AAG15254." evidence="60" ref="1">
    <original>T</original>
    <variation>I</variation>
    <location>
        <position position="995"/>
    </location>
</feature>
<feature type="helix" evidence="68">
    <location>
        <begin position="9"/>
        <end position="15"/>
    </location>
</feature>
<feature type="helix" evidence="68">
    <location>
        <begin position="18"/>
        <end position="31"/>
    </location>
</feature>
<feature type="helix" evidence="68">
    <location>
        <begin position="50"/>
        <end position="60"/>
    </location>
</feature>
<feature type="helix" evidence="68">
    <location>
        <begin position="63"/>
        <end position="77"/>
    </location>
</feature>
<feature type="helix" evidence="68">
    <location>
        <begin position="80"/>
        <end position="85"/>
    </location>
</feature>
<feature type="strand" evidence="68">
    <location>
        <begin position="88"/>
        <end position="91"/>
    </location>
</feature>
<feature type="strand" evidence="73">
    <location>
        <begin position="286"/>
        <end position="288"/>
    </location>
</feature>
<feature type="helix" evidence="73">
    <location>
        <begin position="300"/>
        <end position="306"/>
    </location>
</feature>
<feature type="helix" evidence="73">
    <location>
        <begin position="314"/>
        <end position="316"/>
    </location>
</feature>
<feature type="strand" evidence="73">
    <location>
        <begin position="322"/>
        <end position="324"/>
    </location>
</feature>
<feature type="strand" evidence="73">
    <location>
        <begin position="328"/>
        <end position="333"/>
    </location>
</feature>
<feature type="turn" evidence="73">
    <location>
        <begin position="340"/>
        <end position="342"/>
    </location>
</feature>
<feature type="helix" evidence="73">
    <location>
        <begin position="343"/>
        <end position="353"/>
    </location>
</feature>
<feature type="turn" evidence="73">
    <location>
        <begin position="358"/>
        <end position="360"/>
    </location>
</feature>
<feature type="strand" evidence="73">
    <location>
        <begin position="362"/>
        <end position="366"/>
    </location>
</feature>
<feature type="helix" evidence="73">
    <location>
        <begin position="369"/>
        <end position="374"/>
    </location>
</feature>
<feature type="helix" evidence="73">
    <location>
        <begin position="380"/>
        <end position="387"/>
    </location>
</feature>
<feature type="strand" evidence="73">
    <location>
        <begin position="389"/>
        <end position="391"/>
    </location>
</feature>
<feature type="helix" evidence="73">
    <location>
        <begin position="395"/>
        <end position="399"/>
    </location>
</feature>
<feature type="helix" evidence="73">
    <location>
        <begin position="402"/>
        <end position="404"/>
    </location>
</feature>
<feature type="strand" evidence="73">
    <location>
        <begin position="405"/>
        <end position="408"/>
    </location>
</feature>
<feature type="strand" evidence="73">
    <location>
        <begin position="412"/>
        <end position="415"/>
    </location>
</feature>
<feature type="strand" evidence="73">
    <location>
        <begin position="422"/>
        <end position="425"/>
    </location>
</feature>
<feature type="helix" evidence="73">
    <location>
        <begin position="436"/>
        <end position="444"/>
    </location>
</feature>
<feature type="strand" evidence="73">
    <location>
        <begin position="447"/>
        <end position="451"/>
    </location>
</feature>
<feature type="strand" evidence="73">
    <location>
        <begin position="453"/>
        <end position="457"/>
    </location>
</feature>
<feature type="strand" evidence="73">
    <location>
        <begin position="459"/>
        <end position="461"/>
    </location>
</feature>
<feature type="turn" evidence="73">
    <location>
        <begin position="464"/>
        <end position="466"/>
    </location>
</feature>
<feature type="strand" evidence="73">
    <location>
        <begin position="474"/>
        <end position="478"/>
    </location>
</feature>
<feature type="helix" evidence="73">
    <location>
        <begin position="483"/>
        <end position="491"/>
    </location>
</feature>
<feature type="helix" evidence="73">
    <location>
        <begin position="497"/>
        <end position="509"/>
    </location>
</feature>
<feature type="helix" evidence="73">
    <location>
        <begin position="511"/>
        <end position="516"/>
    </location>
</feature>
<feature type="helix" evidence="73">
    <location>
        <begin position="520"/>
        <end position="535"/>
    </location>
</feature>
<feature type="helix" evidence="73">
    <location>
        <begin position="547"/>
        <end position="558"/>
    </location>
</feature>
<feature type="strand" evidence="73">
    <location>
        <begin position="559"/>
        <end position="561"/>
    </location>
</feature>
<feature type="helix" evidence="73">
    <location>
        <begin position="566"/>
        <end position="580"/>
    </location>
</feature>
<feature type="helix" evidence="73">
    <location>
        <begin position="588"/>
        <end position="593"/>
    </location>
</feature>
<feature type="helix" evidence="73">
    <location>
        <begin position="598"/>
        <end position="607"/>
    </location>
</feature>
<feature type="strand" evidence="73">
    <location>
        <begin position="609"/>
        <end position="611"/>
    </location>
</feature>
<feature type="strand" evidence="73">
    <location>
        <begin position="614"/>
        <end position="617"/>
    </location>
</feature>
<feature type="strand" evidence="73">
    <location>
        <begin position="619"/>
        <end position="622"/>
    </location>
</feature>
<feature type="helix" evidence="73">
    <location>
        <begin position="624"/>
        <end position="639"/>
    </location>
</feature>
<feature type="helix" evidence="73">
    <location>
        <begin position="656"/>
        <end position="659"/>
    </location>
</feature>
<feature type="turn" evidence="73">
    <location>
        <begin position="660"/>
        <end position="662"/>
    </location>
</feature>
<feature type="turn" evidence="73">
    <location>
        <begin position="665"/>
        <end position="667"/>
    </location>
</feature>
<feature type="helix" evidence="73">
    <location>
        <begin position="669"/>
        <end position="676"/>
    </location>
</feature>
<feature type="helix" evidence="73">
    <location>
        <begin position="682"/>
        <end position="689"/>
    </location>
</feature>
<feature type="helix" evidence="73">
    <location>
        <begin position="698"/>
        <end position="701"/>
    </location>
</feature>
<feature type="helix" evidence="73">
    <location>
        <begin position="703"/>
        <end position="709"/>
    </location>
</feature>
<feature type="helix" evidence="73">
    <location>
        <begin position="716"/>
        <end position="723"/>
    </location>
</feature>
<feature type="turn" evidence="73">
    <location>
        <begin position="728"/>
        <end position="732"/>
    </location>
</feature>
<feature type="strand" evidence="73">
    <location>
        <begin position="733"/>
        <end position="735"/>
    </location>
</feature>
<feature type="helix" evidence="73">
    <location>
        <begin position="748"/>
        <end position="759"/>
    </location>
</feature>
<feature type="strand" evidence="73">
    <location>
        <begin position="760"/>
        <end position="763"/>
    </location>
</feature>
<feature type="strand" evidence="73">
    <location>
        <begin position="766"/>
        <end position="770"/>
    </location>
</feature>
<feature type="strand" evidence="73">
    <location>
        <begin position="783"/>
        <end position="787"/>
    </location>
</feature>
<feature type="helix" evidence="70">
    <location>
        <begin position="794"/>
        <end position="804"/>
    </location>
</feature>
<feature type="strand" evidence="71">
    <location>
        <begin position="807"/>
        <end position="809"/>
    </location>
</feature>
<feature type="strand" evidence="70">
    <location>
        <begin position="812"/>
        <end position="814"/>
    </location>
</feature>
<feature type="helix" evidence="70">
    <location>
        <begin position="822"/>
        <end position="833"/>
    </location>
</feature>
<feature type="strand" evidence="70">
    <location>
        <begin position="840"/>
        <end position="843"/>
    </location>
</feature>
<feature type="helix" evidence="70">
    <location>
        <begin position="851"/>
        <end position="862"/>
    </location>
</feature>
<feature type="strand" evidence="70">
    <location>
        <begin position="869"/>
        <end position="871"/>
    </location>
</feature>
<feature type="helix" evidence="70">
    <location>
        <begin position="878"/>
        <end position="889"/>
    </location>
</feature>
<feature type="strand" evidence="70">
    <location>
        <begin position="898"/>
        <end position="900"/>
    </location>
</feature>
<feature type="helix" evidence="70">
    <location>
        <begin position="908"/>
        <end position="910"/>
    </location>
</feature>
<feature type="helix" evidence="70">
    <location>
        <begin position="911"/>
        <end position="920"/>
    </location>
</feature>
<feature type="strand" evidence="70">
    <location>
        <begin position="926"/>
        <end position="928"/>
    </location>
</feature>
<feature type="strand" evidence="70">
    <location>
        <begin position="931"/>
        <end position="933"/>
    </location>
</feature>
<feature type="helix" evidence="70">
    <location>
        <begin position="935"/>
        <end position="946"/>
    </location>
</feature>
<feature type="strand" evidence="70">
    <location>
        <begin position="955"/>
        <end position="957"/>
    </location>
</feature>
<feature type="strand" evidence="73">
    <location>
        <begin position="961"/>
        <end position="963"/>
    </location>
</feature>
<feature type="helix" evidence="70">
    <location>
        <begin position="965"/>
        <end position="977"/>
    </location>
</feature>
<feature type="strand" evidence="70">
    <location>
        <begin position="982"/>
        <end position="984"/>
    </location>
</feature>
<feature type="strand" evidence="72">
    <location>
        <begin position="1089"/>
        <end position="1092"/>
    </location>
</feature>
<feature type="turn" evidence="72">
    <location>
        <begin position="1093"/>
        <end position="1096"/>
    </location>
</feature>
<feature type="strand" evidence="72">
    <location>
        <begin position="1097"/>
        <end position="1102"/>
    </location>
</feature>
<feature type="strand" evidence="72">
    <location>
        <begin position="1104"/>
        <end position="1106"/>
    </location>
</feature>
<feature type="turn" evidence="72">
    <location>
        <begin position="1111"/>
        <end position="1113"/>
    </location>
</feature>
<feature type="strand" evidence="72">
    <location>
        <begin position="1116"/>
        <end position="1118"/>
    </location>
</feature>
<feature type="strand" evidence="72">
    <location>
        <begin position="1123"/>
        <end position="1129"/>
    </location>
</feature>
<feature type="helix" evidence="72">
    <location>
        <begin position="1132"/>
        <end position="1138"/>
    </location>
</feature>
<feature type="turn" evidence="72">
    <location>
        <begin position="1142"/>
        <end position="1144"/>
    </location>
</feature>
<feature type="strand" evidence="72">
    <location>
        <begin position="1145"/>
        <end position="1147"/>
    </location>
</feature>
<feature type="strand" evidence="72">
    <location>
        <begin position="1152"/>
        <end position="1156"/>
    </location>
</feature>
<feature type="strand" evidence="72">
    <location>
        <begin position="1163"/>
        <end position="1166"/>
    </location>
</feature>
<feature type="strand" evidence="72">
    <location>
        <begin position="1174"/>
        <end position="1176"/>
    </location>
</feature>
<feature type="strand" evidence="72">
    <location>
        <begin position="1179"/>
        <end position="1181"/>
    </location>
</feature>
<feature type="strand" evidence="72">
    <location>
        <begin position="1184"/>
        <end position="1188"/>
    </location>
</feature>
<feature type="strand" evidence="72">
    <location>
        <begin position="1191"/>
        <end position="1195"/>
    </location>
</feature>
<feature type="strand" evidence="72">
    <location>
        <begin position="1198"/>
        <end position="1200"/>
    </location>
</feature>
<feature type="strand" evidence="72">
    <location>
        <begin position="1218"/>
        <end position="1220"/>
    </location>
</feature>
<feature type="strand" evidence="72">
    <location>
        <begin position="1223"/>
        <end position="1225"/>
    </location>
</feature>
<feature type="strand" evidence="72">
    <location>
        <begin position="1234"/>
        <end position="1236"/>
    </location>
</feature>
<feature type="strand" evidence="72">
    <location>
        <begin position="1241"/>
        <end position="1253"/>
    </location>
</feature>
<feature type="helix" evidence="72">
    <location>
        <begin position="1257"/>
        <end position="1269"/>
    </location>
</feature>
<feature type="strand" evidence="72">
    <location>
        <begin position="1289"/>
        <end position="1294"/>
    </location>
</feature>
<feature type="strand" evidence="72">
    <location>
        <begin position="1305"/>
        <end position="1308"/>
    </location>
</feature>
<feature type="strand" evidence="72">
    <location>
        <begin position="1314"/>
        <end position="1316"/>
    </location>
</feature>
<feature type="strand" evidence="72">
    <location>
        <begin position="1320"/>
        <end position="1327"/>
    </location>
</feature>
<feature type="strand" evidence="72">
    <location>
        <begin position="1333"/>
        <end position="1338"/>
    </location>
</feature>
<feature type="turn" evidence="72">
    <location>
        <begin position="1339"/>
        <end position="1341"/>
    </location>
</feature>
<feature type="strand" evidence="72">
    <location>
        <begin position="1344"/>
        <end position="1349"/>
    </location>
</feature>
<feature type="helix" evidence="69">
    <location>
        <begin position="1381"/>
        <end position="1384"/>
    </location>
</feature>
<feature type="helix" evidence="69">
    <location>
        <begin position="1386"/>
        <end position="1392"/>
    </location>
</feature>
<feature type="helix" evidence="69">
    <location>
        <begin position="1396"/>
        <end position="1403"/>
    </location>
</feature>
<feature type="turn" evidence="69">
    <location>
        <begin position="1405"/>
        <end position="1407"/>
    </location>
</feature>
<feature type="helix" evidence="69">
    <location>
        <begin position="1410"/>
        <end position="1417"/>
    </location>
</feature>
<feature type="strand" evidence="69">
    <location>
        <begin position="1419"/>
        <end position="1421"/>
    </location>
</feature>
<feature type="helix" evidence="69">
    <location>
        <begin position="1422"/>
        <end position="1433"/>
    </location>
</feature>
<feature type="helix" evidence="69">
    <location>
        <begin position="1438"/>
        <end position="1451"/>
    </location>
</feature>
<feature type="helix" evidence="69">
    <location>
        <begin position="1453"/>
        <end position="1462"/>
    </location>
</feature>
<reference key="1">
    <citation type="journal article" date="2000" name="Cell Death Differ.">
        <title>The PYRIN domain: a novel motif found in apoptosis and inflammation proteins.</title>
        <authorList>
            <person name="Bertin J."/>
            <person name="DiStefano P.S."/>
        </authorList>
    </citation>
    <scope>NUCLEOTIDE SEQUENCE [MRNA] (ISOFORM 2)</scope>
    <scope>VARIANTS HIS-155; SER-246; MET-878; VAL-1119; VAL-1184; LEU-1241 AND CYS-1366</scope>
</reference>
<reference key="2">
    <citation type="journal article" date="2001" name="Curr. Biol.">
        <title>The pyrin domain: a possible member of the death domain-fold family implicated in apoptosis and inflammation.</title>
        <authorList>
            <person name="Martinon F."/>
            <person name="Hofmann K."/>
            <person name="Tschopp J."/>
        </authorList>
    </citation>
    <scope>NUCLEOTIDE SEQUENCE [MRNA] (ISOFORM 2)</scope>
</reference>
<reference key="3">
    <citation type="journal article" date="2001" name="J. Biol. Chem.">
        <title>Molecular cloning and characterization of DEFCAP-L and -S, two isoforms of a novel member of the mammalian Ced-4 family of apoptosis proteins.</title>
        <authorList>
            <person name="Hlaing T."/>
            <person name="Guo R.-F."/>
            <person name="Dilley K.A."/>
            <person name="Loussia J.M."/>
            <person name="Morrish T.A."/>
            <person name="Shi M.M."/>
            <person name="Vincenz C."/>
            <person name="Ward P.A."/>
        </authorList>
    </citation>
    <scope>NUCLEOTIDE SEQUENCE [MRNA] (ISOFORMS 1 AND 2)</scope>
    <scope>MUTAGENESIS OF LYS-340</scope>
    <source>
        <tissue>Erythroleukemia</tissue>
    </source>
</reference>
<reference key="4">
    <citation type="journal article" date="2001" name="J. Biol. Chem.">
        <title>A novel enhancer of the Apaf1 apoptosome involved in cytochrome c-dependent caspase activation and apoptosis.</title>
        <authorList>
            <person name="Chu Z.-L."/>
            <person name="Pio F."/>
            <person name="Xie Z."/>
            <person name="Welsh K."/>
            <person name="Krajewska M."/>
            <person name="Krajewski S."/>
            <person name="Godzik A."/>
            <person name="Reed J.C."/>
        </authorList>
    </citation>
    <scope>NUCLEOTIDE SEQUENCE [MRNA] (ISOFORMS 1; 2; 3 AND 4)</scope>
    <scope>FUNCTION</scope>
    <scope>TISSUE SPECIFICITY</scope>
    <scope>DEVELOPMENTAL STAGE</scope>
    <source>
        <tissue>T-cell</tissue>
    </source>
</reference>
<reference key="5">
    <citation type="journal article" date="1999" name="DNA Res.">
        <title>Prediction of the coding sequences of unidentified human genes. XIII. The complete sequences of 100 new cDNA clones from brain which code for large proteins in vitro.</title>
        <authorList>
            <person name="Nagase T."/>
            <person name="Ishikawa K."/>
            <person name="Suyama M."/>
            <person name="Kikuno R."/>
            <person name="Hirosawa M."/>
            <person name="Miyajima N."/>
            <person name="Tanaka A."/>
            <person name="Kotani H."/>
            <person name="Nomura N."/>
            <person name="Ohara O."/>
        </authorList>
    </citation>
    <scope>NUCLEOTIDE SEQUENCE [LARGE SCALE MRNA] (ISOFORM 2)</scope>
    <source>
        <tissue>Brain</tissue>
    </source>
</reference>
<reference key="6">
    <citation type="journal article" date="2006" name="Nature">
        <title>DNA sequence of human chromosome 17 and analysis of rearrangement in the human lineage.</title>
        <authorList>
            <person name="Zody M.C."/>
            <person name="Garber M."/>
            <person name="Adams D.J."/>
            <person name="Sharpe T."/>
            <person name="Harrow J."/>
            <person name="Lupski J.R."/>
            <person name="Nicholson C."/>
            <person name="Searle S.M."/>
            <person name="Wilming L."/>
            <person name="Young S.K."/>
            <person name="Abouelleil A."/>
            <person name="Allen N.R."/>
            <person name="Bi W."/>
            <person name="Bloom T."/>
            <person name="Borowsky M.L."/>
            <person name="Bugalter B.E."/>
            <person name="Butler J."/>
            <person name="Chang J.L."/>
            <person name="Chen C.-K."/>
            <person name="Cook A."/>
            <person name="Corum B."/>
            <person name="Cuomo C.A."/>
            <person name="de Jong P.J."/>
            <person name="DeCaprio D."/>
            <person name="Dewar K."/>
            <person name="FitzGerald M."/>
            <person name="Gilbert J."/>
            <person name="Gibson R."/>
            <person name="Gnerre S."/>
            <person name="Goldstein S."/>
            <person name="Grafham D.V."/>
            <person name="Grocock R."/>
            <person name="Hafez N."/>
            <person name="Hagopian D.S."/>
            <person name="Hart E."/>
            <person name="Norman C.H."/>
            <person name="Humphray S."/>
            <person name="Jaffe D.B."/>
            <person name="Jones M."/>
            <person name="Kamal M."/>
            <person name="Khodiyar V.K."/>
            <person name="LaButti K."/>
            <person name="Laird G."/>
            <person name="Lehoczky J."/>
            <person name="Liu X."/>
            <person name="Lokyitsang T."/>
            <person name="Loveland J."/>
            <person name="Lui A."/>
            <person name="Macdonald P."/>
            <person name="Major J.E."/>
            <person name="Matthews L."/>
            <person name="Mauceli E."/>
            <person name="McCarroll S.A."/>
            <person name="Mihalev A.H."/>
            <person name="Mudge J."/>
            <person name="Nguyen C."/>
            <person name="Nicol R."/>
            <person name="O'Leary S.B."/>
            <person name="Osoegawa K."/>
            <person name="Schwartz D.C."/>
            <person name="Shaw-Smith C."/>
            <person name="Stankiewicz P."/>
            <person name="Steward C."/>
            <person name="Swarbreck D."/>
            <person name="Venkataraman V."/>
            <person name="Whittaker C.A."/>
            <person name="Yang X."/>
            <person name="Zimmer A.R."/>
            <person name="Bradley A."/>
            <person name="Hubbard T."/>
            <person name="Birren B.W."/>
            <person name="Rogers J."/>
            <person name="Lander E.S."/>
            <person name="Nusbaum C."/>
        </authorList>
    </citation>
    <scope>NUCLEOTIDE SEQUENCE [LARGE SCALE GENOMIC DNA]</scope>
</reference>
<reference key="7">
    <citation type="journal article" date="2004" name="Genome Res.">
        <title>The status, quality, and expansion of the NIH full-length cDNA project: the Mammalian Gene Collection (MGC).</title>
        <authorList>
            <consortium name="The MGC Project Team"/>
        </authorList>
    </citation>
    <scope>NUCLEOTIDE SEQUENCE [LARGE SCALE MRNA] (ISOFORM 5)</scope>
    <source>
        <tissue>Blood</tissue>
    </source>
</reference>
<reference key="8">
    <citation type="journal article" date="2007" name="BMC Genomics">
        <title>The full-ORF clone resource of the German cDNA consortium.</title>
        <authorList>
            <person name="Bechtel S."/>
            <person name="Rosenfelder H."/>
            <person name="Duda A."/>
            <person name="Schmidt C.P."/>
            <person name="Ernst U."/>
            <person name="Wellenreuther R."/>
            <person name="Mehrle A."/>
            <person name="Schuster C."/>
            <person name="Bahr A."/>
            <person name="Bloecker H."/>
            <person name="Heubner D."/>
            <person name="Hoerlein A."/>
            <person name="Michel G."/>
            <person name="Wedler H."/>
            <person name="Koehrer K."/>
            <person name="Ottenwaelder B."/>
            <person name="Poustka A."/>
            <person name="Wiemann S."/>
            <person name="Schupp I."/>
        </authorList>
    </citation>
    <scope>NUCLEOTIDE SEQUENCE [LARGE SCALE MRNA] OF 282-1473 (ISOFORM 1)</scope>
    <scope>VARIANT VAL-1184</scope>
    <source>
        <tissue>Uterus</tissue>
    </source>
</reference>
<reference key="9">
    <citation type="journal article" date="2004" name="Nat. Genet.">
        <title>Complete sequencing and characterization of 21,243 full-length human cDNAs.</title>
        <authorList>
            <person name="Ota T."/>
            <person name="Suzuki Y."/>
            <person name="Nishikawa T."/>
            <person name="Otsuki T."/>
            <person name="Sugiyama T."/>
            <person name="Irie R."/>
            <person name="Wakamatsu A."/>
            <person name="Hayashi K."/>
            <person name="Sato H."/>
            <person name="Nagai K."/>
            <person name="Kimura K."/>
            <person name="Makita H."/>
            <person name="Sekine M."/>
            <person name="Obayashi M."/>
            <person name="Nishi T."/>
            <person name="Shibahara T."/>
            <person name="Tanaka T."/>
            <person name="Ishii S."/>
            <person name="Yamamoto J."/>
            <person name="Saito K."/>
            <person name="Kawai Y."/>
            <person name="Isono Y."/>
            <person name="Nakamura Y."/>
            <person name="Nagahari K."/>
            <person name="Murakami K."/>
            <person name="Yasuda T."/>
            <person name="Iwayanagi T."/>
            <person name="Wagatsuma M."/>
            <person name="Shiratori A."/>
            <person name="Sudo H."/>
            <person name="Hosoiri T."/>
            <person name="Kaku Y."/>
            <person name="Kodaira H."/>
            <person name="Kondo H."/>
            <person name="Sugawara M."/>
            <person name="Takahashi M."/>
            <person name="Kanda K."/>
            <person name="Yokoi T."/>
            <person name="Furuya T."/>
            <person name="Kikkawa E."/>
            <person name="Omura Y."/>
            <person name="Abe K."/>
            <person name="Kamihara K."/>
            <person name="Katsuta N."/>
            <person name="Sato K."/>
            <person name="Tanikawa M."/>
            <person name="Yamazaki M."/>
            <person name="Ninomiya K."/>
            <person name="Ishibashi T."/>
            <person name="Yamashita H."/>
            <person name="Murakawa K."/>
            <person name="Fujimori K."/>
            <person name="Tanai H."/>
            <person name="Kimata M."/>
            <person name="Watanabe M."/>
            <person name="Hiraoka S."/>
            <person name="Chiba Y."/>
            <person name="Ishida S."/>
            <person name="Ono Y."/>
            <person name="Takiguchi S."/>
            <person name="Watanabe S."/>
            <person name="Yosida M."/>
            <person name="Hotuta T."/>
            <person name="Kusano J."/>
            <person name="Kanehori K."/>
            <person name="Takahashi-Fujii A."/>
            <person name="Hara H."/>
            <person name="Tanase T.-O."/>
            <person name="Nomura Y."/>
            <person name="Togiya S."/>
            <person name="Komai F."/>
            <person name="Hara R."/>
            <person name="Takeuchi K."/>
            <person name="Arita M."/>
            <person name="Imose N."/>
            <person name="Musashino K."/>
            <person name="Yuuki H."/>
            <person name="Oshima A."/>
            <person name="Sasaki N."/>
            <person name="Aotsuka S."/>
            <person name="Yoshikawa Y."/>
            <person name="Matsunawa H."/>
            <person name="Ichihara T."/>
            <person name="Shiohata N."/>
            <person name="Sano S."/>
            <person name="Moriya S."/>
            <person name="Momiyama H."/>
            <person name="Satoh N."/>
            <person name="Takami S."/>
            <person name="Terashima Y."/>
            <person name="Suzuki O."/>
            <person name="Nakagawa S."/>
            <person name="Senoh A."/>
            <person name="Mizoguchi H."/>
            <person name="Goto Y."/>
            <person name="Shimizu F."/>
            <person name="Wakebe H."/>
            <person name="Hishigaki H."/>
            <person name="Watanabe T."/>
            <person name="Sugiyama A."/>
            <person name="Takemoto M."/>
            <person name="Kawakami B."/>
            <person name="Yamazaki M."/>
            <person name="Watanabe K."/>
            <person name="Kumagai A."/>
            <person name="Itakura S."/>
            <person name="Fukuzumi Y."/>
            <person name="Fujimori Y."/>
            <person name="Komiyama M."/>
            <person name="Tashiro H."/>
            <person name="Tanigami A."/>
            <person name="Fujiwara T."/>
            <person name="Ono T."/>
            <person name="Yamada K."/>
            <person name="Fujii Y."/>
            <person name="Ozaki K."/>
            <person name="Hirao M."/>
            <person name="Ohmori Y."/>
            <person name="Kawabata A."/>
            <person name="Hikiji T."/>
            <person name="Kobatake N."/>
            <person name="Inagaki H."/>
            <person name="Ikema Y."/>
            <person name="Okamoto S."/>
            <person name="Okitani R."/>
            <person name="Kawakami T."/>
            <person name="Noguchi S."/>
            <person name="Itoh T."/>
            <person name="Shigeta K."/>
            <person name="Senba T."/>
            <person name="Matsumura K."/>
            <person name="Nakajima Y."/>
            <person name="Mizuno T."/>
            <person name="Morinaga M."/>
            <person name="Sasaki M."/>
            <person name="Togashi T."/>
            <person name="Oyama M."/>
            <person name="Hata H."/>
            <person name="Watanabe M."/>
            <person name="Komatsu T."/>
            <person name="Mizushima-Sugano J."/>
            <person name="Satoh T."/>
            <person name="Shirai Y."/>
            <person name="Takahashi Y."/>
            <person name="Nakagawa K."/>
            <person name="Okumura K."/>
            <person name="Nagase T."/>
            <person name="Nomura N."/>
            <person name="Kikuchi H."/>
            <person name="Masuho Y."/>
            <person name="Yamashita R."/>
            <person name="Nakai K."/>
            <person name="Yada T."/>
            <person name="Nakamura Y."/>
            <person name="Ohara O."/>
            <person name="Isogai T."/>
            <person name="Sugano S."/>
        </authorList>
    </citation>
    <scope>NUCLEOTIDE SEQUENCE [LARGE SCALE MRNA] OF 508-1473</scope>
</reference>
<reference key="10">
    <citation type="journal article" date="2012" name="J. Biol. Chem.">
        <title>Autolytic proteolysis within the function to find domain (FIIND) is required for NLRP1 inflammasome activity.</title>
        <authorList>
            <person name="Finger J.N."/>
            <person name="Lich J.D."/>
            <person name="Dare L.C."/>
            <person name="Cook M.N."/>
            <person name="Brown K.K."/>
            <person name="Duraiswami C."/>
            <person name="Bertin J.J."/>
            <person name="Bertin J."/>
            <person name="Gough P.J."/>
        </authorList>
    </citation>
    <scope>PROTEIN SEQUENCE OF 1213-1224</scope>
    <scope>FUNCTION</scope>
    <scope>INTERACTION WITH PYCARD</scope>
    <scope>INVOLVEMENT IN INFLAMMASOME COMPLEX</scope>
    <scope>AUTOCATALYTIC CLEAVAGE</scope>
    <scope>SUBCELLULAR LOCATION</scope>
    <scope>CHARACTERIZATION OF VARIANTS VAL-1119 AND VAL-1184</scope>
    <scope>MUTAGENESIS OF HIS-1168; HIS-1186; SER-1211; PHE-1212; SER-1213; PRO-1214 AND HIS-1249</scope>
</reference>
<reference key="11">
    <citation type="journal article" date="2012" name="J. Biol. Chem.">
        <authorList>
            <person name="Finger J.N."/>
            <person name="Lich J.D."/>
            <person name="Dare L.C."/>
            <person name="Cook M.N."/>
            <person name="Brown K.K."/>
            <person name="Duraiswami C."/>
            <person name="Bertin J.J."/>
            <person name="Bertin J."/>
            <person name="Gough P.J."/>
        </authorList>
    </citation>
    <scope>ERRATUM OF PUBMED:22665479</scope>
</reference>
<reference key="12">
    <citation type="journal article" date="2002" name="Mol. Cell">
        <title>The inflammasome: a molecular platform triggering activation of inflammatory caspases and processing of proIL-beta.</title>
        <authorList>
            <person name="Martinon F."/>
            <person name="Burns K."/>
            <person name="Tschopp J."/>
        </authorList>
    </citation>
    <scope>FUNCTION</scope>
    <scope>INTERACTION WITH CASP1; CASP5 AND PYCARD</scope>
    <scope>AUTOINHIBITION</scope>
    <scope>IDENTIFICATION IN INFLAMMASOME COMPLEX</scope>
</reference>
<reference key="13">
    <citation type="journal article" date="2004" name="Biochem. J.">
        <title>NALP1 is a transcriptional target for cAMP-response-element-binding protein (CREB) in myeloid leukaemia cells.</title>
        <authorList>
            <person name="Sanz C."/>
            <person name="Calasanz M.J."/>
            <person name="Andreu E."/>
            <person name="Richard C."/>
            <person name="Prosper F."/>
            <person name="Fernandez-Luna J.L."/>
        </authorList>
    </citation>
    <scope>TISSUE SPECIFICITY</scope>
    <scope>DEVELOPMENTAL STAGE</scope>
</reference>
<reference key="14">
    <citation type="journal article" date="2004" name="Cell. Signal.">
        <title>Expression of NALP1 in cerebellar granule neurons stimulates apoptosis.</title>
        <authorList>
            <person name="Liu F."/>
            <person name="Lo C.F."/>
            <person name="Ning X."/>
            <person name="Kajkowski E.M."/>
            <person name="Jin M."/>
            <person name="Chiriac C."/>
            <person name="Gonzales C."/>
            <person name="Naureckiene S."/>
            <person name="Lock Y.-W."/>
            <person name="Pong K."/>
            <person name="Zaleska M.M."/>
            <person name="Jacobsen J.S."/>
            <person name="Silverman S."/>
            <person name="Ozenberger B.A."/>
        </authorList>
    </citation>
    <scope>FUNCTION</scope>
    <scope>MUTAGENESIS OF 339-GLY-LYS-340</scope>
</reference>
<reference key="15">
    <citation type="journal article" date="2007" name="Cell">
        <title>Bcl-2 and Bcl-XL regulate proinflammatory caspase-1 activation by interaction with NALP1.</title>
        <authorList>
            <person name="Bruey J.M."/>
            <person name="Bruey-Sedano N."/>
            <person name="Luciano F."/>
            <person name="Zhai D."/>
            <person name="Balpai R."/>
            <person name="Xu C."/>
            <person name="Kress C.L."/>
            <person name="Bailly-Maitre B."/>
            <person name="Li X."/>
            <person name="Osterman A."/>
            <person name="Matsuzawa S."/>
            <person name="Terskikh A.V."/>
            <person name="Faustin B."/>
            <person name="Reed J.C."/>
        </authorList>
    </citation>
    <scope>FUNCTION</scope>
    <scope>INTERACTION WITH BCL2; BCL2L1; CASP5 AND PYCARD</scope>
    <scope>SUBCELLULAR LOCATION</scope>
    <scope>ACTIVATION BY MDP</scope>
</reference>
<reference key="16">
    <citation type="journal article" date="2007" name="Cell Death Differ.">
        <title>The SPRY domain of Pyrin, mutated in familial Mediterranean fever patients, interacts with inflammasome components and inhibits proIL-1beta processing.</title>
        <authorList>
            <person name="Papin S."/>
            <person name="Cuenin S."/>
            <person name="Agostini L."/>
            <person name="Martinon F."/>
            <person name="Werner S."/>
            <person name="Beer H.D."/>
            <person name="Grutter C."/>
            <person name="Grutter M."/>
            <person name="Tschopp J."/>
        </authorList>
    </citation>
    <scope>INTERACTION WITH MEFV</scope>
</reference>
<reference key="17">
    <citation type="journal article" date="2007" name="J. Histochem. Cytochem.">
        <title>Inflammasome components NALP 1 and 3 Show distinct but separate expression profiles in human tissues suggesting a site-specific role in the inflammatory response.</title>
        <authorList>
            <person name="Kummer J.A."/>
            <person name="Broekhuizen R."/>
            <person name="Everett H."/>
            <person name="Agostini L."/>
            <person name="Kuijk L."/>
            <person name="Martinon F."/>
            <person name="van Bruggen R."/>
            <person name="Tschopp J."/>
        </authorList>
    </citation>
    <scope>SUBCELLULAR LOCATION</scope>
    <scope>TISSUE SPECIFICITY</scope>
    <scope>DEVELOPMENTAL STAGE</scope>
</reference>
<reference key="18">
    <citation type="journal article" date="2007" name="Mol. Cell">
        <title>Reconstituted NALP1 inflammasome reveals two-step mechanism of caspase-1 activation.</title>
        <authorList>
            <person name="Faustin B."/>
            <person name="Lartigue L."/>
            <person name="Bruey J.-M."/>
            <person name="Luciano F."/>
            <person name="Sergienko E."/>
            <person name="Bailly-Maitre B."/>
            <person name="Volkmann N."/>
            <person name="Hanein D."/>
            <person name="Rouiller I."/>
            <person name="Reed J.C."/>
        </authorList>
    </citation>
    <scope>FUNCTION</scope>
    <scope>INTERACTION WITH CASP1</scope>
    <scope>AUTOINHIBITION</scope>
    <scope>HOMOMERIZATION</scope>
    <scope>ACTIVATION BY MDP</scope>
</reference>
<reference key="19">
    <citation type="journal article" date="2008" name="Proc. Natl. Acad. Sci. U.S.A.">
        <title>A NOD2-NALP1 complex mediates caspase-1-dependent IL-1beta secretion in response to Bacillus anthracis infection and muramyl dipeptide.</title>
        <authorList>
            <person name="Hsu L.C."/>
            <person name="Ali S.R."/>
            <person name="McGillivray S."/>
            <person name="Tseng P.H."/>
            <person name="Mariathasan S."/>
            <person name="Humke E.W."/>
            <person name="Eckmann L."/>
            <person name="Powell J.J."/>
            <person name="Nizet V."/>
            <person name="Dixit V.M."/>
            <person name="Karin M."/>
        </authorList>
    </citation>
    <scope>FUNCTION</scope>
    <scope>INTERACTION WITH NOD2</scope>
    <scope>ACTIVATION BY MDP</scope>
</reference>
<reference key="20">
    <citation type="journal article" date="2020" name="Immunol. Rev.">
        <title>The NLRP1 and CARD8 inflammasomes.</title>
        <authorList>
            <person name="Taabazuing C.Y."/>
            <person name="Griswold A.R."/>
            <person name="Bachovchin D.A."/>
        </authorList>
    </citation>
    <scope>REVIEW</scope>
</reference>
<reference key="21">
    <citation type="journal article" date="2009" name="Infect. Immun.">
        <title>Expression of Nlrp1b inflammasome components in human fibroblasts confers susceptibility to anthrax lethal toxin.</title>
        <authorList>
            <person name="Liao K.C."/>
            <person name="Mogridge J."/>
        </authorList>
    </citation>
    <scope>LACK OF ACTIVATION BY ANTHRAX LETHAL TOXIN</scope>
    <scope>ACTIVITY REGULATION</scope>
</reference>
<reference key="22">
    <citation type="journal article" date="2011" name="PLoS ONE">
        <title>CARD8 and NLRP1 undergo autoproteolytic processing through a ZU5-like domain.</title>
        <authorList>
            <person name="D'Osualdo A."/>
            <person name="Weichenberger C.X."/>
            <person name="Wagner R.N."/>
            <person name="Godzik A."/>
            <person name="Wooley J."/>
            <person name="Reed J.C."/>
        </authorList>
    </citation>
    <scope>FUNCTION</scope>
    <scope>AUTOCATALYTIC CLEAVAGE</scope>
    <scope>MUTAGENESIS OF SER-1213</scope>
</reference>
<reference key="23">
    <citation type="journal article" date="2012" name="Nature">
        <title>Novel role of PKR in inflammasome activation and HMGB1 release.</title>
        <authorList>
            <person name="Lu B."/>
            <person name="Nakamura T."/>
            <person name="Inouye K."/>
            <person name="Li J."/>
            <person name="Tang Y."/>
            <person name="Lundbaeck P."/>
            <person name="Valdes-Ferrer S.I."/>
            <person name="Olofsson P.S."/>
            <person name="Kalb T."/>
            <person name="Roth J."/>
            <person name="Zou Y."/>
            <person name="Erlandsson-Harris H."/>
            <person name="Yang H."/>
            <person name="Ting J.P."/>
            <person name="Wang H."/>
            <person name="Andersson U."/>
            <person name="Antoine D.J."/>
            <person name="Chavan S.S."/>
            <person name="Hotamisligil G.S."/>
            <person name="Tracey K.J."/>
        </authorList>
    </citation>
    <scope>FUNCTION</scope>
    <scope>INTERACTION WITH EIF2AK2</scope>
</reference>
<reference key="24">
    <citation type="journal article" date="2006" name="Cell Death Differ.">
        <title>Interaction of F1L with the BH3 domain of Bak is responsible for inhibiting vaccinia-induced apoptosis.</title>
        <authorList>
            <person name="Postigo A."/>
            <person name="Cross J.R."/>
            <person name="Downward J."/>
            <person name="Way M."/>
        </authorList>
    </citation>
    <scope>INTERACTION WITH VACCINIA VIRUS PROTEIN F1</scope>
</reference>
<reference key="25">
    <citation type="journal article" date="2014" name="Int. J. Cardiol.">
        <title>NLRP1 inflammasome, and not NLRP3, is the key in the shift to proinflammatory state on endothelial cells in peripheral arterial disease.</title>
        <authorList>
            <person name="Bleda S."/>
            <person name="de Haro J."/>
            <person name="Varela C."/>
            <person name="Esparza L."/>
            <person name="Ferruelo A."/>
            <person name="Acin F."/>
        </authorList>
    </citation>
    <scope>INDUCTION</scope>
</reference>
<reference key="26">
    <citation type="journal article" date="2015" name="J. Cell Biol.">
        <title>TRIM-mediated precision autophagy targets cytoplasmic regulators of innate immunity.</title>
        <authorList>
            <person name="Kimura T."/>
            <person name="Jain A."/>
            <person name="Choi S.W."/>
            <person name="Mandell M.A."/>
            <person name="Schroder K."/>
            <person name="Johansen T."/>
            <person name="Deretic V."/>
        </authorList>
    </citation>
    <scope>INTERACTION WITH MEFV</scope>
</reference>
<reference key="27">
    <citation type="journal article" date="2015" name="J. Invest. Dermatol.">
        <title>Caspase-1 activity is required for UVB-induced apoptosis of human keratinocytes.</title>
        <authorList>
            <person name="Sollberger G."/>
            <person name="Strittmatter G.E."/>
            <person name="Grossi S."/>
            <person name="Garstkiewicz M."/>
            <person name="Auf dem Keller U."/>
            <person name="French L.E."/>
            <person name="Beer H.D."/>
        </authorList>
    </citation>
    <scope>FUNCTION</scope>
</reference>
<reference key="28">
    <citation type="journal article" date="2015" name="PLoS ONE">
        <title>Transcription factor ATF4 induces NLRP1 inflammasome expression during endoplasmic reticulum stress.</title>
        <authorList>
            <person name="D'Osualdo A."/>
            <person name="Anania V.G."/>
            <person name="Yu K."/>
            <person name="Lill J.R."/>
            <person name="Kaufman R.J."/>
            <person name="Matsuzawa S."/>
            <person name="Reed J.C."/>
        </authorList>
    </citation>
    <scope>INDUCTION BY ATF4</scope>
</reference>
<reference key="29">
    <citation type="journal article" date="2018" name="J. Biol. Chem.">
        <title>Human DPP9 represses NLRP1 inflammasome and protects against autoinflammatory diseases via both peptidase activity and FIIND domain binding.</title>
        <authorList>
            <person name="Zhong F.L."/>
            <person name="Robinson K."/>
            <person name="Teo D.E.T."/>
            <person name="Tan K.Y."/>
            <person name="Lim C."/>
            <person name="Harapas C.R."/>
            <person name="Yu C.H."/>
            <person name="Xie W.H."/>
            <person name="Sobota R.M."/>
            <person name="Au V.B."/>
            <person name="Hopkins R."/>
            <person name="D'Osualdo A."/>
            <person name="Reed J.C."/>
            <person name="Connolly J.E."/>
            <person name="Masters S.L."/>
            <person name="Reversade B."/>
        </authorList>
    </citation>
    <scope>FUNCTION</scope>
    <scope>ACTIVITY REGULATION</scope>
    <scope>SUBCELLULAR LOCATION</scope>
    <scope>CHARACTERIZATION OF VARIANT AIADK ARG-1214</scope>
</reference>
<reference key="30">
    <citation type="journal article" date="2018" name="J. Invest. Dermatol.">
        <title>Genome Editing of Human Primary Keratinocytes by CRISPR/Cas9 Reveals an Essential Role of the NLRP1 Inflammasome in UVB Sensing.</title>
        <authorList>
            <person name="Fenini G."/>
            <person name="Grossi S."/>
            <person name="Contassot E."/>
            <person name="Biedermann T."/>
            <person name="Reichmann E."/>
            <person name="French L.E."/>
            <person name="Beer H.D."/>
        </authorList>
    </citation>
    <scope>FUNCTION</scope>
</reference>
<reference key="31">
    <citation type="journal article" date="2019" name="ACS Chem. Biol.">
        <title>DPP9's enzymatic activity and not its binding to CARD8 inhibits inflammasome activation.</title>
        <authorList>
            <person name="Griswold A.R."/>
            <person name="Ball D.P."/>
            <person name="Bhattacharjee A."/>
            <person name="Chui A.J."/>
            <person name="Rao S.D."/>
            <person name="Taabazuing C.Y."/>
            <person name="Bachovchin D.A."/>
        </authorList>
    </citation>
    <scope>INTERACTION WITH DPP8 AND DPP9</scope>
    <scope>ACTIVITY REGULATION</scope>
    <scope>MUTAGENESIS OF SER-1213</scope>
</reference>
<reference key="32">
    <citation type="journal article" date="2020" name="Life. Sci Alliance">
        <title>Caspase-1 interdomain linker cleavage is required for pyroptosis.</title>
        <authorList>
            <person name="Ball D.P."/>
            <person name="Taabazuing C.Y."/>
            <person name="Griswold A.R."/>
            <person name="Orth E.L."/>
            <person name="Rao S.D."/>
            <person name="Kotliar I.B."/>
            <person name="Vostal L.E."/>
            <person name="Johnson D.C."/>
            <person name="Bachovchin D.A."/>
        </authorList>
    </citation>
    <scope>FUNCTION</scope>
    <scope>PROTEOLYTIC CLEAVAGE</scope>
    <scope>MUTAGENESIS OF SER-1213</scope>
</reference>
<reference key="33">
    <citation type="journal article" date="2020" name="Science">
        <title>Human NLRP1 is a sensor for double-stranded RNA.</title>
        <authorList>
            <person name="Bauernfried S."/>
            <person name="Scherr M.J."/>
            <person name="Pichlmair A."/>
            <person name="Duderstadt K.E."/>
            <person name="Hornung V."/>
        </authorList>
    </citation>
    <scope>FUNCTION</scope>
    <scope>ACTIVITY REGULATION</scope>
    <scope>DOMAIN</scope>
    <scope>MUTAGENESIS OF SER-1213</scope>
    <scope>DNA-BINDING</scope>
    <scope>RNA-BINDING</scope>
    <scope>CATALYTIC ACTIVITY</scope>
</reference>
<reference key="34">
    <citation type="journal article" date="2021" name="Cell Rep.">
        <title>Gasdermin E permits interleukin-1 beta release in distinct sublytic and pyroptotic phases.</title>
        <authorList>
            <person name="Zhou B."/>
            <person name="Abbott D.W."/>
        </authorList>
    </citation>
    <scope>FUNCTION</scope>
</reference>
<reference key="35">
    <citation type="journal article" date="2021" name="Elife">
        <title>Diverse viral proteases activate the NLRP1 inflammasome.</title>
        <authorList>
            <person name="Tsu B.V."/>
            <person name="Beierschmitt C."/>
            <person name="Ryan A.P."/>
            <person name="Agarwal R."/>
            <person name="Mitchell P.S."/>
            <person name="Daugherty M.D."/>
        </authorList>
    </citation>
    <scope>FUNCTION</scope>
    <scope>ACTIVITY REGULATION</scope>
    <scope>PROTEOLYTIC CLEAVAGE (MICROBIAL INFECTION)</scope>
    <scope>MUTAGENESIS OF GLY-130</scope>
</reference>
<reference key="36">
    <citation type="journal article" date="2022" name="Mol. Cell">
        <title>Human NLRP1 is a sensor of pathogenic coronavirus 3CL proteases in lung epithelial cells.</title>
        <authorList>
            <consortium name="COVID Human Genetic Effort"/>
            <person name="Planes R."/>
            <person name="Pinilla M."/>
            <person name="Santoni K."/>
            <person name="Hessel A."/>
            <person name="Passemar C."/>
            <person name="Lay K."/>
            <person name="Paillette P."/>
            <person name="Valadao A.C."/>
            <person name="Robinson K.S."/>
            <person name="Bastard P."/>
            <person name="Lam N."/>
            <person name="Fadrique R."/>
            <person name="Rossi I."/>
            <person name="Pericat D."/>
            <person name="Bagayoko S."/>
            <person name="Leon-Icaza S.A."/>
            <person name="Rombouts Y."/>
            <person name="Perouzel E."/>
            <person name="Tiraby M."/>
            <person name="Zhang Q."/>
            <person name="Cicuta P."/>
            <person name="Jouanguy E."/>
            <person name="Neyrolles O."/>
            <person name="Bryant C.E."/>
            <person name="Floto A.R."/>
            <person name="Goujon C."/>
            <person name="Lei F.Z."/>
            <person name="Martin-Blondel G."/>
            <person name="Silva S."/>
            <person name="Casanova J.L."/>
            <person name="Cougoule C."/>
            <person name="Reversade B."/>
            <person name="Marcoux J."/>
            <person name="Ravet E."/>
            <person name="Meunier E."/>
        </authorList>
    </citation>
    <scope>FUNCTION</scope>
    <scope>ACTIVITY REGULATION (MICROBIAL INFECTION)</scope>
    <scope>PROTEOLYTIC CLEAVAGE (MICROBIAL INFECTION)</scope>
    <scope>MUTAGENESIS OF GLN-333</scope>
</reference>
<reference key="37">
    <citation type="journal article" date="2021" name="Nature">
        <title>Structural and biochemical mechanisms of NLRP1 inhibition by DPP9.</title>
        <authorList>
            <person name="Huang M."/>
            <person name="Zhang X."/>
            <person name="Toh G.A."/>
            <person name="Gong Q."/>
            <person name="Wang J."/>
            <person name="Han Z."/>
            <person name="Wu B."/>
            <person name="Zhong F."/>
            <person name="Chai J."/>
        </authorList>
    </citation>
    <scope>FUNCTION</scope>
    <scope>ACTIVITY REGULATION</scope>
    <scope>MUTAGENESIS OF PRO-1278 AND LEU-1281</scope>
</reference>
<reference key="38">
    <citation type="journal article" date="2022" name="Nat. Immunol.">
        <title>KSHV-encoded ORF45 activates human NLRP1 inflammasome.</title>
        <authorList>
            <person name="Yang X."/>
            <person name="Zhou J."/>
            <person name="Liu C."/>
            <person name="Qu Y."/>
            <person name="Wang W."/>
            <person name="Xiao M.Z.X."/>
            <person name="Zhu F."/>
            <person name="Liu Z."/>
            <person name="Liang Q."/>
        </authorList>
    </citation>
    <scope>SUBCELLULAR LOCATION (MICROBIAL INFECTION)</scope>
    <scope>INTERACTION WITH HERPES VIRUS 8/HHV-8 PROTEINS ORF45</scope>
</reference>
<reference key="39">
    <citation type="journal article" date="2022" name="Science">
        <title>ZAKalpha-driven ribotoxic stress response activates the human NLRP1 inflammasome.</title>
        <authorList>
            <person name="Robinson K.S."/>
            <person name="Toh G.A."/>
            <person name="Rozario P."/>
            <person name="Chua R."/>
            <person name="Bauernfried S."/>
            <person name="Sun Z."/>
            <person name="Firdaus M.J."/>
            <person name="Bayat S."/>
            <person name="Nadkarni R."/>
            <person name="Poh Z.S."/>
            <person name="Tham K.C."/>
            <person name="Harapas C.R."/>
            <person name="Lim C.K."/>
            <person name="Chu W."/>
            <person name="Tay C.W.S."/>
            <person name="Tan K.Y."/>
            <person name="Zhao T."/>
            <person name="Bonnard C."/>
            <person name="Sobota R."/>
            <person name="Connolly J.E."/>
            <person name="Common J."/>
            <person name="Masters S.L."/>
            <person name="Chen K.W."/>
            <person name="Ho L."/>
            <person name="Wu B."/>
            <person name="Hornung V."/>
            <person name="Zhong F.L."/>
        </authorList>
    </citation>
    <scope>FUNCTION</scope>
    <scope>PHOSPHORYLATION AT SER-93; SER-99; SER-101; SER-107; THR-112; SER-113; THR-114; THR-129; SER-132; SER-163; SER-168; SER-170; SER-173; THR-178; SER-179 AND THR-180</scope>
    <scope>MUTAGENESIS OF 178-THR--THR-180</scope>
</reference>
<reference evidence="63" key="40">
    <citation type="journal article" date="2003" name="Structure">
        <title>NMR structure of the apoptosis- and inflammation-related NALP1 pyrin domain.</title>
        <authorList>
            <person name="Hiller S."/>
            <person name="Kohl A."/>
            <person name="Fiorito F."/>
            <person name="Herrmann T."/>
            <person name="Wider G."/>
            <person name="Tschopp J."/>
            <person name="Gruetter M.G."/>
            <person name="Wuethrich K."/>
        </authorList>
    </citation>
    <scope>STRUCTURE BY NMR OF 1-93</scope>
</reference>
<reference evidence="64" key="41">
    <citation type="submission" date="2009-10" db="PDB data bank">
        <title>Northeast structural genomics consortium target HR3486E.</title>
        <authorList>
            <consortium name="Northeast structural genomics consortium (NESG)"/>
        </authorList>
    </citation>
    <scope>X-RAY CRYSTALLOGRAPHY (3.1 ANGSTROMS) OF 1371-1467</scope>
</reference>
<reference evidence="66" key="42">
    <citation type="journal article" date="2021" name="Nature">
        <title>DPP9 sequesters the C terminus of NLRP1 to repress inflammasome activation.</title>
        <authorList>
            <person name="Hollingsworth L.R."/>
            <person name="Sharif H."/>
            <person name="Griswold A.R."/>
            <person name="Fontana P."/>
            <person name="Mintseris J."/>
            <person name="Dagbay K.B."/>
            <person name="Paulo J.A."/>
            <person name="Gygi S.P."/>
            <person name="Bachovchin D.A."/>
            <person name="Wu H."/>
        </authorList>
    </citation>
    <scope>STRUCTURE BY ELECTRON MICROSCOPY (2.90 ANGSTROMS) IN COMPLEX WITH DPP9</scope>
    <scope>FUNCTION</scope>
    <scope>ACTIVITY REGULATION</scope>
    <scope>INTERACTION WITH DPP9</scope>
    <scope>MUTAGENESIS OF 1193-LEU-LEU-1194; SER-1213; HIS-1276; LYS-1277 AND GLU-1322</scope>
    <scope>CHARACTERIZATION OF VARIANT AIADK ARG-1214</scope>
</reference>
<reference evidence="65" key="43">
    <citation type="journal article" date="2021" name="Nat. Commun.">
        <title>Structural basis for distinct inflammasome complex assembly by human NLRP1 and CARD8.</title>
        <authorList>
            <person name="Gong Q."/>
            <person name="Robinson K."/>
            <person name="Xu C."/>
            <person name="Huynh P.T."/>
            <person name="Chong K.H.C."/>
            <person name="Tan E.Y.J."/>
            <person name="Zhang J."/>
            <person name="Boo Z.Z."/>
            <person name="Teo D.E.T."/>
            <person name="Lay K."/>
            <person name="Zhang Y."/>
            <person name="Lim J.S.Y."/>
            <person name="Goh W.I."/>
            <person name="Wright G."/>
            <person name="Zhong F.L."/>
            <person name="Reversade B."/>
            <person name="Wu B."/>
        </authorList>
    </citation>
    <scope>STRUCTURE BY ELECTRON MICROSCOPY (3.70 ANGSTROMS) OF 1379-1466</scope>
    <scope>SUBCELLULAR LOCATION</scope>
    <scope>SUBUNIT</scope>
    <scope>DOMAIN</scope>
    <scope>MUTAGENESIS OF ARG-1240; 1260-ARG-LYS-1261; 1278-PRO-PRO-1279; PHE-1320; ASP-1383; ARG-1386; GLU-1387; GLN-1388; ARG-1392; SER-1395; GLU-1397; LYS-1402; HIS-1404; GLN-1406; GLN-1410; GLU-1411; TYR-1413; GLU-1414; ARG-1415; ASN-1420; ARG-1422; ARG-1427; LYS-1428; GLN-1434; ASP-1437; LYS-1449; GLU-1450; THR-1451; HIS-1454; GLU-1458 AND GLU-1461</scope>
</reference>
<reference evidence="67" key="44">
    <citation type="journal article" date="2021" name="Nat. Commun.">
        <title>Mechanism of filament formation in UPA-promoted CARD8 and NLRP1 inflammasomes.</title>
        <authorList>
            <person name="Robert Hollingsworth L."/>
            <person name="David L."/>
            <person name="Li Y."/>
            <person name="Griswold A.R."/>
            <person name="Ruan J."/>
            <person name="Sharif H."/>
            <person name="Fontana P."/>
            <person name="Orth-He E.L."/>
            <person name="Fu T.M."/>
            <person name="Bachovchin D.A."/>
            <person name="Wu H."/>
        </authorList>
    </citation>
    <scope>STRUCTURE BY ELECTRON MICROSCOPY (3.60 ANGSTROMS) OF 1379-1473</scope>
    <scope>SUBCELLULAR LOCATION</scope>
    <scope>SUBUNIT</scope>
    <scope>DOMAIN</scope>
    <scope>MUTAGENESIS OF ARG-1392; GLU-1397; ASP-1401; GLU-1411; GLU-1414; ARG-1427; TYR-1445; MET-1457; TRP-1460 AND GLU-1461</scope>
</reference>
<reference key="45">
    <citation type="journal article" date="2007" name="N. Engl. J. Med.">
        <title>NALP1 in vitiligo-associated multiple autoimmune disease.</title>
        <authorList>
            <person name="Jin Y."/>
            <person name="Mailloux C.M."/>
            <person name="Gowan K."/>
            <person name="Riccardi S.L."/>
            <person name="LaBerge G."/>
            <person name="Bennett D.C."/>
            <person name="Fain P.R."/>
            <person name="Spritz R.A."/>
        </authorList>
    </citation>
    <scope>INVOLVEMENT IN VAMAS1</scope>
    <scope>VARIANT HIS-155</scope>
</reference>
<reference key="46">
    <citation type="journal article" date="2013" name="J. Med. Genet.">
        <title>Whole exome sequencing identifies a mutation for a novel form of corneal intraepithelial dyskeratosis.</title>
        <authorList>
            <person name="Soler V.J."/>
            <person name="Tran-Viet K.N."/>
            <person name="Galiacy S.D."/>
            <person name="Limviphuvadh V."/>
            <person name="Klemm T.P."/>
            <person name="St Germain E."/>
            <person name="Fournie P.R."/>
            <person name="Guillaud C."/>
            <person name="Maurer-Stroh S."/>
            <person name="Hawthorne F."/>
            <person name="Suarez C."/>
            <person name="Kantelip B."/>
            <person name="Afshari N.A."/>
            <person name="Creveaux I."/>
            <person name="Luo X."/>
            <person name="Meng W."/>
            <person name="Calvas P."/>
            <person name="Cassagne M."/>
            <person name="Arne J.L."/>
            <person name="Rozen S.G."/>
            <person name="Malecaze F."/>
            <person name="Young T.L."/>
        </authorList>
    </citation>
    <scope>VARIANT MSPC THR-77</scope>
    <scope>TISSUE SPECIFICITY</scope>
</reference>
<reference key="47">
    <citation type="journal article" date="2016" name="Cell">
        <title>Germline NLRP1 mutations cause skin inflammatory and cancer susceptibility syndromes via inflammasome activation.</title>
        <authorList>
            <person name="Zhong F.L."/>
            <person name="Mamai O."/>
            <person name="Sborgi L."/>
            <person name="Boussofara L."/>
            <person name="Hopkins R."/>
            <person name="Robinson K."/>
            <person name="Szeverenyi I."/>
            <person name="Takeichi T."/>
            <person name="Balaji R."/>
            <person name="Lau A."/>
            <person name="Tye H."/>
            <person name="Roy K."/>
            <person name="Bonnard C."/>
            <person name="Ahl P.J."/>
            <person name="Jones L.A."/>
            <person name="Baker P."/>
            <person name="Lacina L."/>
            <person name="Otsuka A."/>
            <person name="Fournie P.R."/>
            <person name="Malecaze F."/>
            <person name="Lane E.B."/>
            <person name="Akiyama M."/>
            <person name="Kabashima K."/>
            <person name="Connolly J.E."/>
            <person name="Masters S.L."/>
            <person name="Soler V.J."/>
            <person name="Omar S.S."/>
            <person name="McGrath J.A."/>
            <person name="Nedelcu R."/>
            <person name="Gribaa M."/>
            <person name="Denguezli M."/>
            <person name="Saad A."/>
            <person name="Hiller S."/>
            <person name="Reversade B."/>
        </authorList>
    </citation>
    <scope>VARIANTS MSPC THR-54; VAL-66 AND 787-PHE--ARG-843 DEL</scope>
    <scope>CHARACTERIZATION OF VARIANTS MSPC THR-54; VAL-66 AND 787-PHE--ARG-843 DEL</scope>
    <scope>FUNCTION</scope>
    <scope>TISSUE SPECIFICITY</scope>
</reference>
<reference key="48">
    <citation type="journal article" date="2017" name="Ann. Rheum. Dis.">
        <title>A new autoinflammatory and autoimmune syndrome associated with NLRP1 mutations: NAIAD (NLRP1-associated autoinflammation with arthritis and dyskeratosis).</title>
        <authorList>
            <person name="Grandemange S."/>
            <person name="Sanchez E."/>
            <person name="Louis-Plence P."/>
            <person name="Tran Mau-Them F."/>
            <person name="Bessis D."/>
            <person name="Coubes C."/>
            <person name="Frouin E."/>
            <person name="Seyger M."/>
            <person name="Girard M."/>
            <person name="Puechberty J."/>
            <person name="Costes V."/>
            <person name="Rodiere M."/>
            <person name="Carbasse A."/>
            <person name="Jeziorski E."/>
            <person name="Portales P."/>
            <person name="Sarrabay G."/>
            <person name="Mondain M."/>
            <person name="Jorgensen C."/>
            <person name="Apparailly F."/>
            <person name="Hoppenreijs E."/>
            <person name="Touitou I."/>
            <person name="Genevieve D."/>
        </authorList>
    </citation>
    <scope>INVOLVEMENT IN AIADK</scope>
    <scope>VARIANTS AIADK TRP-726 AND ARG-1214</scope>
</reference>
<reference key="49">
    <citation type="journal article" date="2019" name="Proc. Natl. Acad. Sci. U.S.A.">
        <title>Homozygous NLRP1 gain-of-function mutation in siblings with a syndromic form of recurrent respiratory papillomatosis.</title>
        <authorList>
            <person name="Drutman S.B."/>
            <person name="Haerynck F."/>
            <person name="Zhong F.L."/>
            <person name="Hum D."/>
            <person name="Hernandez N.J."/>
            <person name="Belkaya S."/>
            <person name="Rapaport F."/>
            <person name="de Jong S.J."/>
            <person name="Creytens D."/>
            <person name="Tavernier S.J."/>
            <person name="Bonte K."/>
            <person name="De Schepper S."/>
            <person name="van der Werff Ten Bosch J."/>
            <person name="Lorenzo-Diaz L."/>
            <person name="Wullaert A."/>
            <person name="Bossuyt X."/>
            <person name="Orth G."/>
            <person name="Bonagura V.R."/>
            <person name="Beziat V."/>
            <person name="Abel L."/>
            <person name="Jouanguy E."/>
            <person name="Reversade B."/>
            <person name="Casanova J.L."/>
        </authorList>
    </citation>
    <scope>INVOLVEMENT IN JRRP</scope>
    <scope>FUNCTION</scope>
    <scope>VARIANT JRRP ASN-755</scope>
    <scope>CHARACTERIZATION OF VARIANT JRRP ASN-755</scope>
</reference>
<reference key="50">
    <citation type="journal article" date="2020" name="Science">
        <title>Enteroviral 3C protease activates the human NLRP1 inflammasome in airway epithelia.</title>
        <authorList>
            <person name="Robinson K.S."/>
            <person name="Teo D.E.T."/>
            <person name="Tan K.S."/>
            <person name="Toh G.A."/>
            <person name="Ong H.H."/>
            <person name="Lim C.K."/>
            <person name="Lay K."/>
            <person name="Au B.V."/>
            <person name="Lew T.S."/>
            <person name="Chu J.J.H."/>
            <person name="Chow V.T.K."/>
            <person name="Wang Y."/>
            <person name="Zhong F.L."/>
            <person name="Reversade B."/>
        </authorList>
    </citation>
    <scope>CHARACTERIZATION OF VARIANT MSPC THR-77</scope>
    <scope>FUNCTION</scope>
    <scope>ACTIVITY REGULATION</scope>
    <scope>PROTEOLYTIC CLEAVAGE (MICROBIAL INFECTION)</scope>
    <scope>UBIQUITINATION</scope>
    <scope>MUTAGENESIS OF GLN-76; GLN-85; GLN-87; GLN-110; GLN-130; GLN-139; GLN-158; GLN-171; GLN-191; GLN-199; GLN-205 AND PHE-1212</scope>
</reference>